<reference key="1">
    <citation type="journal article" date="1994" name="J. Biol. Chem.">
        <title>A novel RING finger protein interacts with the cytoplasmic domain of CD40.</title>
        <authorList>
            <person name="Hu H.M."/>
            <person name="O'Rourke K."/>
            <person name="Boguski M.S."/>
            <person name="Dixit V.M."/>
        </authorList>
    </citation>
    <scope>NUCLEOTIDE SEQUENCE [MRNA] (ISOFORM 1)</scope>
    <scope>INTERACTION WITH TNFRSF5</scope>
</reference>
<reference key="2">
    <citation type="journal article" date="1995" name="Cell">
        <title>The Epstein-Barr virus transforming protein LMP1 engages signaling proteins for the tumor necrosis factor receptor family.</title>
        <authorList>
            <person name="Mosialos G."/>
            <person name="Birkenbach M."/>
            <person name="Yalamanchili R."/>
            <person name="VanArsdale T."/>
            <person name="Ware C."/>
            <person name="Kieff E."/>
        </authorList>
    </citation>
    <scope>NUCLEOTIDE SEQUENCE [MRNA] (ISOFORM 1)</scope>
    <scope>CHARACTERIZATION</scope>
    <scope>INTERACTION WITH EBV LMP1</scope>
    <source>
        <tissue>Lymphoma</tissue>
    </source>
</reference>
<reference key="3">
    <citation type="journal article" date="1995" name="FEBS Lett.">
        <title>A novel member of the TRAF family of putative signal transducing proteins binds to the cytosolic domain of CD40.</title>
        <authorList>
            <person name="Sato T."/>
            <person name="Irie S."/>
            <person name="Reed J.C."/>
        </authorList>
    </citation>
    <scope>NUCLEOTIDE SEQUENCE [MRNA] (ISOFORM 1)</scope>
    <scope>INTERACTION WITH TNFRSF5</scope>
    <scope>VARIANT THR-129</scope>
    <source>
        <tissue>Fetal brain</tissue>
    </source>
</reference>
<reference key="4">
    <citation type="journal article" date="1995" name="Science">
        <title>Involvement of CRAF1, a relative of TRAF, in CD40 signaling.</title>
        <authorList>
            <person name="Cheng G."/>
            <person name="Cleary A.M."/>
            <person name="Ye Z.S."/>
            <person name="Hong D.I."/>
            <person name="Lederman S."/>
            <person name="Baltimore D."/>
        </authorList>
    </citation>
    <scope>NUCLEOTIDE SEQUENCE [MRNA] (ISOFORM 1)</scope>
    <scope>INTERACTION WITH TNFRSF5</scope>
    <scope>VARIANT THR-129</scope>
</reference>
<reference key="5">
    <citation type="submission" date="2003-02" db="EMBL/GenBank/DDBJ databases">
        <title>Full-length cDNA libraries and normalization.</title>
        <authorList>
            <person name="Li W.B."/>
            <person name="Gruber C."/>
            <person name="Jessee J."/>
            <person name="Polayes D."/>
        </authorList>
    </citation>
    <scope>NUCLEOTIDE SEQUENCE [LARGE SCALE MRNA] (ISOFORM 1)</scope>
    <source>
        <tissue>Fetal brain</tissue>
    </source>
</reference>
<reference key="6">
    <citation type="journal article" date="2004" name="Nat. Genet.">
        <title>Complete sequencing and characterization of 21,243 full-length human cDNAs.</title>
        <authorList>
            <person name="Ota T."/>
            <person name="Suzuki Y."/>
            <person name="Nishikawa T."/>
            <person name="Otsuki T."/>
            <person name="Sugiyama T."/>
            <person name="Irie R."/>
            <person name="Wakamatsu A."/>
            <person name="Hayashi K."/>
            <person name="Sato H."/>
            <person name="Nagai K."/>
            <person name="Kimura K."/>
            <person name="Makita H."/>
            <person name="Sekine M."/>
            <person name="Obayashi M."/>
            <person name="Nishi T."/>
            <person name="Shibahara T."/>
            <person name="Tanaka T."/>
            <person name="Ishii S."/>
            <person name="Yamamoto J."/>
            <person name="Saito K."/>
            <person name="Kawai Y."/>
            <person name="Isono Y."/>
            <person name="Nakamura Y."/>
            <person name="Nagahari K."/>
            <person name="Murakami K."/>
            <person name="Yasuda T."/>
            <person name="Iwayanagi T."/>
            <person name="Wagatsuma M."/>
            <person name="Shiratori A."/>
            <person name="Sudo H."/>
            <person name="Hosoiri T."/>
            <person name="Kaku Y."/>
            <person name="Kodaira H."/>
            <person name="Kondo H."/>
            <person name="Sugawara M."/>
            <person name="Takahashi M."/>
            <person name="Kanda K."/>
            <person name="Yokoi T."/>
            <person name="Furuya T."/>
            <person name="Kikkawa E."/>
            <person name="Omura Y."/>
            <person name="Abe K."/>
            <person name="Kamihara K."/>
            <person name="Katsuta N."/>
            <person name="Sato K."/>
            <person name="Tanikawa M."/>
            <person name="Yamazaki M."/>
            <person name="Ninomiya K."/>
            <person name="Ishibashi T."/>
            <person name="Yamashita H."/>
            <person name="Murakawa K."/>
            <person name="Fujimori K."/>
            <person name="Tanai H."/>
            <person name="Kimata M."/>
            <person name="Watanabe M."/>
            <person name="Hiraoka S."/>
            <person name="Chiba Y."/>
            <person name="Ishida S."/>
            <person name="Ono Y."/>
            <person name="Takiguchi S."/>
            <person name="Watanabe S."/>
            <person name="Yosida M."/>
            <person name="Hotuta T."/>
            <person name="Kusano J."/>
            <person name="Kanehori K."/>
            <person name="Takahashi-Fujii A."/>
            <person name="Hara H."/>
            <person name="Tanase T.-O."/>
            <person name="Nomura Y."/>
            <person name="Togiya S."/>
            <person name="Komai F."/>
            <person name="Hara R."/>
            <person name="Takeuchi K."/>
            <person name="Arita M."/>
            <person name="Imose N."/>
            <person name="Musashino K."/>
            <person name="Yuuki H."/>
            <person name="Oshima A."/>
            <person name="Sasaki N."/>
            <person name="Aotsuka S."/>
            <person name="Yoshikawa Y."/>
            <person name="Matsunawa H."/>
            <person name="Ichihara T."/>
            <person name="Shiohata N."/>
            <person name="Sano S."/>
            <person name="Moriya S."/>
            <person name="Momiyama H."/>
            <person name="Satoh N."/>
            <person name="Takami S."/>
            <person name="Terashima Y."/>
            <person name="Suzuki O."/>
            <person name="Nakagawa S."/>
            <person name="Senoh A."/>
            <person name="Mizoguchi H."/>
            <person name="Goto Y."/>
            <person name="Shimizu F."/>
            <person name="Wakebe H."/>
            <person name="Hishigaki H."/>
            <person name="Watanabe T."/>
            <person name="Sugiyama A."/>
            <person name="Takemoto M."/>
            <person name="Kawakami B."/>
            <person name="Yamazaki M."/>
            <person name="Watanabe K."/>
            <person name="Kumagai A."/>
            <person name="Itakura S."/>
            <person name="Fukuzumi Y."/>
            <person name="Fujimori Y."/>
            <person name="Komiyama M."/>
            <person name="Tashiro H."/>
            <person name="Tanigami A."/>
            <person name="Fujiwara T."/>
            <person name="Ono T."/>
            <person name="Yamada K."/>
            <person name="Fujii Y."/>
            <person name="Ozaki K."/>
            <person name="Hirao M."/>
            <person name="Ohmori Y."/>
            <person name="Kawabata A."/>
            <person name="Hikiji T."/>
            <person name="Kobatake N."/>
            <person name="Inagaki H."/>
            <person name="Ikema Y."/>
            <person name="Okamoto S."/>
            <person name="Okitani R."/>
            <person name="Kawakami T."/>
            <person name="Noguchi S."/>
            <person name="Itoh T."/>
            <person name="Shigeta K."/>
            <person name="Senba T."/>
            <person name="Matsumura K."/>
            <person name="Nakajima Y."/>
            <person name="Mizuno T."/>
            <person name="Morinaga M."/>
            <person name="Sasaki M."/>
            <person name="Togashi T."/>
            <person name="Oyama M."/>
            <person name="Hata H."/>
            <person name="Watanabe M."/>
            <person name="Komatsu T."/>
            <person name="Mizushima-Sugano J."/>
            <person name="Satoh T."/>
            <person name="Shirai Y."/>
            <person name="Takahashi Y."/>
            <person name="Nakagawa K."/>
            <person name="Okumura K."/>
            <person name="Nagase T."/>
            <person name="Nomura N."/>
            <person name="Kikuchi H."/>
            <person name="Masuho Y."/>
            <person name="Yamashita R."/>
            <person name="Nakai K."/>
            <person name="Yada T."/>
            <person name="Nakamura Y."/>
            <person name="Ohara O."/>
            <person name="Isogai T."/>
            <person name="Sugano S."/>
        </authorList>
    </citation>
    <scope>NUCLEOTIDE SEQUENCE [LARGE SCALE MRNA] (ISOFORM 2)</scope>
    <source>
        <tissue>Thymus</tissue>
    </source>
</reference>
<reference key="7">
    <citation type="journal article" date="2003" name="Nature">
        <title>The DNA sequence and analysis of human chromosome 14.</title>
        <authorList>
            <person name="Heilig R."/>
            <person name="Eckenberg R."/>
            <person name="Petit J.-L."/>
            <person name="Fonknechten N."/>
            <person name="Da Silva C."/>
            <person name="Cattolico L."/>
            <person name="Levy M."/>
            <person name="Barbe V."/>
            <person name="De Berardinis V."/>
            <person name="Ureta-Vidal A."/>
            <person name="Pelletier E."/>
            <person name="Vico V."/>
            <person name="Anthouard V."/>
            <person name="Rowen L."/>
            <person name="Madan A."/>
            <person name="Qin S."/>
            <person name="Sun H."/>
            <person name="Du H."/>
            <person name="Pepin K."/>
            <person name="Artiguenave F."/>
            <person name="Robert C."/>
            <person name="Cruaud C."/>
            <person name="Bruels T."/>
            <person name="Jaillon O."/>
            <person name="Friedlander L."/>
            <person name="Samson G."/>
            <person name="Brottier P."/>
            <person name="Cure S."/>
            <person name="Segurens B."/>
            <person name="Aniere F."/>
            <person name="Samain S."/>
            <person name="Crespeau H."/>
            <person name="Abbasi N."/>
            <person name="Aiach N."/>
            <person name="Boscus D."/>
            <person name="Dickhoff R."/>
            <person name="Dors M."/>
            <person name="Dubois I."/>
            <person name="Friedman C."/>
            <person name="Gouyvenoux M."/>
            <person name="James R."/>
            <person name="Madan A."/>
            <person name="Mairey-Estrada B."/>
            <person name="Mangenot S."/>
            <person name="Martins N."/>
            <person name="Menard M."/>
            <person name="Oztas S."/>
            <person name="Ratcliffe A."/>
            <person name="Shaffer T."/>
            <person name="Trask B."/>
            <person name="Vacherie B."/>
            <person name="Bellemere C."/>
            <person name="Belser C."/>
            <person name="Besnard-Gonnet M."/>
            <person name="Bartol-Mavel D."/>
            <person name="Boutard M."/>
            <person name="Briez-Silla S."/>
            <person name="Combette S."/>
            <person name="Dufosse-Laurent V."/>
            <person name="Ferron C."/>
            <person name="Lechaplais C."/>
            <person name="Louesse C."/>
            <person name="Muselet D."/>
            <person name="Magdelenat G."/>
            <person name="Pateau E."/>
            <person name="Petit E."/>
            <person name="Sirvain-Trukniewicz P."/>
            <person name="Trybou A."/>
            <person name="Vega-Czarny N."/>
            <person name="Bataille E."/>
            <person name="Bluet E."/>
            <person name="Bordelais I."/>
            <person name="Dubois M."/>
            <person name="Dumont C."/>
            <person name="Guerin T."/>
            <person name="Haffray S."/>
            <person name="Hammadi R."/>
            <person name="Muanga J."/>
            <person name="Pellouin V."/>
            <person name="Robert D."/>
            <person name="Wunderle E."/>
            <person name="Gauguet G."/>
            <person name="Roy A."/>
            <person name="Sainte-Marthe L."/>
            <person name="Verdier J."/>
            <person name="Verdier-Discala C."/>
            <person name="Hillier L.W."/>
            <person name="Fulton L."/>
            <person name="McPherson J."/>
            <person name="Matsuda F."/>
            <person name="Wilson R."/>
            <person name="Scarpelli C."/>
            <person name="Gyapay G."/>
            <person name="Wincker P."/>
            <person name="Saurin W."/>
            <person name="Quetier F."/>
            <person name="Waterston R."/>
            <person name="Hood L."/>
            <person name="Weissenbach J."/>
        </authorList>
    </citation>
    <scope>NUCLEOTIDE SEQUENCE [LARGE SCALE GENOMIC DNA]</scope>
</reference>
<reference key="8">
    <citation type="journal article" date="2004" name="Genome Res.">
        <title>The status, quality, and expansion of the NIH full-length cDNA project: the Mammalian Gene Collection (MGC).</title>
        <authorList>
            <consortium name="The MGC Project Team"/>
        </authorList>
    </citation>
    <scope>NUCLEOTIDE SEQUENCE [LARGE SCALE MRNA] (ISOFORM 1)</scope>
    <source>
        <tissue>Brain</tissue>
    </source>
</reference>
<reference key="9">
    <citation type="journal article" date="1998" name="Mol. Immunol.">
        <title>A single gene for human TRAF-3 at chromosome 14q32.3 encodes a variety of mRNA species by alternative polyadenylation, mRNA splicing and transcription initiation.</title>
        <authorList>
            <person name="van Eyndhoven W.G."/>
            <person name="Frank D."/>
            <person name="Kalachikov S."/>
            <person name="Cleary A.M."/>
            <person name="Hong D.I."/>
            <person name="Cho E."/>
            <person name="Nasr S."/>
            <person name="Perez A.J."/>
            <person name="Mackus W.J.M."/>
            <person name="Cayanis E."/>
            <person name="Wellington S."/>
            <person name="Fischer S.G."/>
            <person name="Warburton D."/>
            <person name="Lederman S."/>
        </authorList>
    </citation>
    <scope>NUCLEOTIDE SEQUENCE [MRNA] OF 536-568</scope>
</reference>
<reference key="10">
    <citation type="journal article" date="1996" name="J. Biol. Chem.">
        <title>TRAF5, an activator of NF-kappaB and putative signal transducer for the lymphotoxin-beta receptor.</title>
        <authorList>
            <person name="Nakano H."/>
            <person name="Oshima H."/>
            <person name="Chung W."/>
            <person name="Williams-Abbott L."/>
            <person name="Ware C.F."/>
            <person name="Yagita H."/>
            <person name="Okumura K."/>
        </authorList>
    </citation>
    <scope>INTERACTION WITH LTBR</scope>
</reference>
<reference key="11">
    <citation type="journal article" date="1996" name="Proc. Natl. Acad. Sci. U.S.A.">
        <title>I-TRAF is a novel TRAF-interacting protein that regulates TRAF-mediated signal transduction.</title>
        <authorList>
            <person name="Rothe M."/>
            <person name="Xiong J."/>
            <person name="Shu H.-B."/>
            <person name="Williamson K."/>
            <person name="Goddard A."/>
            <person name="Goeddel D.V."/>
        </authorList>
    </citation>
    <scope>INTERACTION WITH TANK</scope>
</reference>
<reference key="12">
    <citation type="journal article" date="1997" name="Biochem. Biophys. Res. Commun.">
        <title>Binding sites of cytoplasmic effectors TRAF1, 2, and 3 on CD30 and other members of the TNF receptor superfamily.</title>
        <authorList>
            <person name="Boucher L.-M."/>
            <person name="Marengere L.E."/>
            <person name="Lu Y."/>
            <person name="Thukral S."/>
            <person name="Mak T.W."/>
        </authorList>
    </citation>
    <scope>INTERACTION WITH TNFRSF8</scope>
</reference>
<reference key="13">
    <citation type="journal article" date="1997" name="J. Biol. Chem.">
        <title>Herpesvirus entry mediator, a member of the tumor necrosis factor receptor (TNFR) family, interacts with members of the TNFR-associated factor family and activates the transcription factors NF-kappaB and AP-1.</title>
        <authorList>
            <person name="Marsters S.A."/>
            <person name="Ayres T.M."/>
            <person name="Skubatch M."/>
            <person name="Gray C.L."/>
            <person name="Rothe M."/>
            <person name="Ashkenazi A."/>
        </authorList>
    </citation>
    <scope>INTERACTION WITH TNFRSF14</scope>
</reference>
<reference key="14">
    <citation type="journal article" date="1997" name="Proc. Natl. Acad. Sci. U.S.A.">
        <title>Tumor necrosis factor (TNF)-mediated kinase cascades: bifurcation of nuclear factor-kappaB and c-jun N-terminal kinase (JNK/SAPK) pathways at TNF receptor-associated factor 2.</title>
        <authorList>
            <person name="Song H.Y."/>
            <person name="Regnier C.H."/>
            <person name="Kirschning C.J."/>
            <person name="Goeddel D.V."/>
            <person name="Rothe M."/>
        </authorList>
    </citation>
    <scope>INTERACTION WITH MAP3K14</scope>
</reference>
<reference key="15">
    <citation type="journal article" date="1998" name="Biochemistry">
        <title>CD40-tumor necrosis factor receptor-associated factor (TRAF) interactions: regulation of CD40 signaling through multiple TRAF binding sites and TRAF hetero-oligomerization.</title>
        <authorList>
            <person name="Pullen S.S."/>
            <person name="Miller H.G."/>
            <person name="Everdeen D.S."/>
            <person name="Dang T.T."/>
            <person name="Crute J.J."/>
            <person name="Kehry M.R."/>
        </authorList>
    </citation>
    <scope>INTERACTION WITH TNFRSF5 AND TRAF5</scope>
</reference>
<reference key="16">
    <citation type="journal article" date="1998" name="J. Biol. Chem.">
        <title>Activation of OX40 signal transduction pathways leads to tumor necrosis factor receptor-associated factor (TRAF) 2- and TRAF5-mediated NF-kappaB activation.</title>
        <authorList>
            <person name="Kawamata S."/>
            <person name="Hori T."/>
            <person name="Imura A."/>
            <person name="Takaori-Kondo A."/>
            <person name="Uchiyama T."/>
        </authorList>
    </citation>
    <scope>INTERACTION WITH TNFRSF4</scope>
</reference>
<reference key="17">
    <citation type="journal article" date="1998" name="J. Biol. Chem.">
        <title>The TRAF family of signal transducers mediates NF-kappaB activation by the TRANCE receptor.</title>
        <authorList>
            <person name="Wong B.R."/>
            <person name="Josien R."/>
            <person name="Lee S.Y."/>
            <person name="Vologodskaia M."/>
            <person name="Steinman R.M."/>
            <person name="Choi Y."/>
        </authorList>
    </citation>
    <scope>INTERACTION WITH TNFRSF11A</scope>
</reference>
<reference key="18">
    <citation type="journal article" date="1998" name="Mol. Cell">
        <title>ASK1 is essential for JNK/SAPK activation by TRAF2.</title>
        <authorList>
            <person name="Nishitoh H."/>
            <person name="Saitoh M."/>
            <person name="Mochida Y."/>
            <person name="Takeda K."/>
            <person name="Nakano H."/>
            <person name="Rothe M."/>
            <person name="Miyazono K."/>
            <person name="Ichijo H."/>
        </authorList>
    </citation>
    <scope>INTERACTION WITH MAP3K5</scope>
</reference>
<reference key="19">
    <citation type="journal article" date="1998" name="Mol. Cell. Biol.">
        <title>4-1BB and Ox40 are members of a tumor necrosis factor (TNF)-nerve growth factor receptor subfamily that bind TNF receptor-associated factors and activate nuclear factor kappaB.</title>
        <authorList>
            <person name="Arch R.H."/>
            <person name="Thompson C.B."/>
        </authorList>
    </citation>
    <scope>INTERACTION WITH TNFRSF4 AND TNFRSF9</scope>
</reference>
<reference key="20">
    <citation type="journal article" date="1999" name="J. Biol. Chem.">
        <title>Identification of a novel activation-inducible protein of the tumor necrosis factor receptor superfamily and its ligand.</title>
        <authorList>
            <person name="Kwon B."/>
            <person name="Yu K.-Y."/>
            <person name="Ni J."/>
            <person name="Yu G.-L."/>
            <person name="Jang I.-K."/>
            <person name="Kim Y.-J."/>
            <person name="Xing L."/>
            <person name="Liu D."/>
            <person name="Wang S.-X."/>
            <person name="Kwon B.S."/>
        </authorList>
    </citation>
    <scope>INTERACTION WITH TNFRSF18</scope>
    <source>
        <tissue>T-cell</tissue>
    </source>
</reference>
<reference key="21">
    <citation type="journal article" date="1999" name="Oncogene">
        <title>Mediation of TNF receptor-associated factor effector functions by apoptosis signal-regulating kinase-1 (ASK1).</title>
        <authorList>
            <person name="Hoeflich K.P."/>
            <person name="Yeh W.C."/>
            <person name="Yao Z."/>
            <person name="Mak T.W."/>
            <person name="Woodgett J.R."/>
        </authorList>
    </citation>
    <scope>INTERACTION WITH MAP3K5</scope>
</reference>
<reference key="22">
    <citation type="journal article" date="2000" name="J. Biol. Chem.">
        <title>TAJ, a novel member of the tumor necrosis factor receptor family, activates the c-Jun N-terminal kinase pathway and mediates caspase-independent cell death.</title>
        <authorList>
            <person name="Eby M.T."/>
            <person name="Jasmin A."/>
            <person name="Kumar A."/>
            <person name="Sharma K."/>
            <person name="Chaudhary P.M."/>
        </authorList>
    </citation>
    <scope>INTERACTION WITH TNFRSF19</scope>
</reference>
<reference key="23">
    <citation type="journal article" date="2000" name="J. Biol. Chem.">
        <title>TTRAP, a novel protein that associates with CD40, tumor necrosis factor (TNF) receptor-75 and TNF receptor-associated factors (TRAFs), and that inhibits nuclear factor-kappa B activation.</title>
        <authorList>
            <person name="Pype S."/>
            <person name="Declercq W."/>
            <person name="Ibrahimi A."/>
            <person name="Michiels C."/>
            <person name="Van Rietschoten J.G.I."/>
            <person name="Dewulf N."/>
            <person name="de Boer M."/>
            <person name="Vandenabeele P."/>
            <person name="Huylebroeck D."/>
            <person name="Remacle J.E."/>
        </authorList>
    </citation>
    <scope>INTERACTION WITH TTRAP</scope>
</reference>
<reference key="24">
    <citation type="journal article" date="2000" name="J. Biol. Chem.">
        <title>MIP-T3, a novel protein linking tumor necrosis factor receptor-associated factor 3 to the microtubule network.</title>
        <authorList>
            <person name="Ling L."/>
            <person name="Goeddel D.V."/>
        </authorList>
    </citation>
    <scope>INTERACTION WITH TRAF3IP1</scope>
</reference>
<reference key="25">
    <citation type="journal article" date="2000" name="J. Immunol.">
        <title>TNF receptor family member BCMA (B cell maturation) associates with TNF receptor-associated factor (TRAF) 1, TRAF2, and TRAF3 and activates NF-kappa B, elk-1, c-Jun N-terminal kinase, and p38 mitogen-activated protein kinase.</title>
        <authorList>
            <person name="Hatzoglou A."/>
            <person name="Roussel J."/>
            <person name="Bourgeade M.-F."/>
            <person name="Rogier E."/>
            <person name="Madry C."/>
            <person name="Inoue J."/>
            <person name="Devergne O."/>
            <person name="Tsapis A."/>
        </authorList>
    </citation>
    <scope>INTERACTION WITH TNFRSF17</scope>
</reference>
<reference key="26">
    <citation type="journal article" date="2001" name="J. Biol. Chem.">
        <title>The ectodermal dysplasia receptor activates the nuclear factor-kappaB, JNK, and cell death pathways and binds to ectodysplasin A.</title>
        <authorList>
            <person name="Kumar A."/>
            <person name="Eby M.T."/>
            <person name="Sinha S."/>
            <person name="Jasmin A."/>
            <person name="Chaudhary P.M."/>
        </authorList>
    </citation>
    <scope>INTERACTION WITH EDAR</scope>
</reference>
<reference key="27">
    <citation type="journal article" date="2004" name="J. Biol. Chem.">
        <title>TRAF3 forms heterotrimers with TRAF2 and modulates its ability to mediate NF-{kappa}B activation.</title>
        <authorList>
            <person name="He L."/>
            <person name="Grammer A.C."/>
            <person name="Wu X."/>
            <person name="Lipsky P.E."/>
        </authorList>
    </citation>
    <scope>FUNCTION</scope>
    <scope>SUBCELLULAR LOCATION</scope>
    <scope>SUBUNIT</scope>
</reference>
<reference key="28">
    <citation type="journal article" date="2004" name="J. Biol. Chem.">
        <title>Regulation of the NF-kappaB-inducing kinase by tumor necrosis factor receptor-associated factor 3-induced degradation.</title>
        <authorList>
            <person name="Liao G."/>
            <person name="Zhang M."/>
            <person name="Harhaj E.W."/>
            <person name="Sun S.C."/>
        </authorList>
    </citation>
    <scope>FUNCTION</scope>
    <scope>PROTEASOMAL DEGRADATION</scope>
    <scope>INTERACTION WITH MAP3K14</scope>
</reference>
<reference key="29">
    <citation type="journal article" date="2007" name="Science">
        <title>DUBA: a deubiquitinase that regulates type I interferon production.</title>
        <authorList>
            <person name="Kayagaki N."/>
            <person name="Phung Q."/>
            <person name="Chan S."/>
            <person name="Chaudhari R."/>
            <person name="Quan C."/>
            <person name="O'Rourke K.M."/>
            <person name="Eby M."/>
            <person name="Pietras E."/>
            <person name="Cheng G."/>
            <person name="Bazan J.F."/>
            <person name="Zhang Z."/>
            <person name="Arnott D."/>
            <person name="Dixit V.M."/>
        </authorList>
    </citation>
    <scope>INTERACTION WITH OTUD5 AND TBK1</scope>
    <scope>FUNCTION AS E3 PROTEIN-UBIQUITIN LIGASE</scope>
    <scope>UBIQUITINATION</scope>
</reference>
<reference key="30">
    <citation type="journal article" date="2008" name="J. Virol.">
        <title>The NY-1 hantavirus Gn cytoplasmic tail coprecipitates TRAF3 and inhibits cellular interferon responses by disrupting TBK1-TRAF3 complex formation.</title>
        <authorList>
            <person name="Alff P.J."/>
            <person name="Sen N."/>
            <person name="Gorbunova E."/>
            <person name="Gavrilovskaya I.N."/>
            <person name="Mackow E.R."/>
        </authorList>
    </citation>
    <scope>INTERACTION WITH NEW YORK HANTAVIRUS GLYCOPROTEIN N (MICROBIAL INFECTION)</scope>
</reference>
<reference key="31">
    <citation type="journal article" date="2009" name="J. Biol. Chem.">
        <title>The tyrosine kinase c-Src enhances RIG-I (retinoic acid-inducible gene I)-elicited antiviral signaling.</title>
        <authorList>
            <person name="Johnsen I.B."/>
            <person name="Nguyen T.T."/>
            <person name="Bergstroem B."/>
            <person name="Fitzgerald K.A."/>
            <person name="Anthonsen M.W."/>
        </authorList>
    </citation>
    <scope>INTERACTION WITH SRC</scope>
</reference>
<reference key="32">
    <citation type="journal article" date="2009" name="PLoS Pathog.">
        <title>The E3 ubiquitin ligase Triad3A negatively regulates the RIG-I/MAVS signaling pathway by targeting TRAF3 for degradation.</title>
        <authorList>
            <person name="Nakhaei P."/>
            <person name="Mesplede T."/>
            <person name="Solis M."/>
            <person name="Sun Q."/>
            <person name="Zhao T."/>
            <person name="Yang L."/>
            <person name="Chuang T.H."/>
            <person name="Ware C.F."/>
            <person name="Lin R."/>
            <person name="Hiscott J."/>
        </authorList>
    </citation>
    <scope>UBIQUITINATION</scope>
    <scope>MUTAGENESIS OF TYR-441 AND GLN-443</scope>
    <scope>INTERACTION WITH RNF216 AND MAVS</scope>
</reference>
<reference key="33">
    <citation type="journal article" date="2010" name="J. Biol. Chem.">
        <title>Regulation of virus-triggered signaling by OTUB1- and OTUB2-mediated deubiquitination of TRAF3 and TRAF6.</title>
        <authorList>
            <person name="Li S."/>
            <person name="Zheng H."/>
            <person name="Mao A.P."/>
            <person name="Zhong B."/>
            <person name="Li Y."/>
            <person name="Liu Y."/>
            <person name="Gao Y."/>
            <person name="Ran Y."/>
            <person name="Tien P."/>
            <person name="Shu H.B."/>
        </authorList>
    </citation>
    <scope>UBIQUITINATION</scope>
    <scope>INTERACTION WITH OTUB1 AND OTUB2</scope>
</reference>
<reference key="34">
    <citation type="journal article" date="2010" name="J. Biol. Chem.">
        <title>Virus-triggered ubiquitination of TRAF3/6 by cIAP1/2 is essential for induction of interferon-beta (IFN-beta) and cellular antiviral response.</title>
        <authorList>
            <person name="Mao A.P."/>
            <person name="Li S."/>
            <person name="Zhong B."/>
            <person name="Li Y."/>
            <person name="Yan J."/>
            <person name="Li Q."/>
            <person name="Teng C."/>
            <person name="Shu H.B."/>
        </authorList>
    </citation>
    <scope>FUNCTION</scope>
    <scope>INTERACTION WITH BIRC2 AND BIRC3</scope>
    <scope>SUBCELLULAR LOCATION</scope>
    <scope>UBIQUITINATION</scope>
</reference>
<reference key="35">
    <citation type="journal article" date="2010" name="J. Biol. Chem.">
        <title>TRAF3 controls activation of the canonical and alternative NFkappaB by the lymphotoxin beta receptor.</title>
        <authorList>
            <person name="Bista P."/>
            <person name="Zeng W."/>
            <person name="Ryan S."/>
            <person name="Bailly V."/>
            <person name="Browning J.L."/>
            <person name="Lukashev M.E."/>
        </authorList>
    </citation>
    <scope>FUNCTION</scope>
</reference>
<reference key="36">
    <citation type="journal article" date="2010" name="Mol. Cell. Biochem.">
        <title>Ubiquitin ligase Smurf1 targets TRAF family proteins for ubiquitination and degradation.</title>
        <authorList>
            <person name="Li S."/>
            <person name="Lu K."/>
            <person name="Wang J."/>
            <person name="An L."/>
            <person name="Yang G."/>
            <person name="Chen H."/>
            <person name="Cui Y."/>
            <person name="Yin X."/>
            <person name="Xie P."/>
            <person name="Xing G."/>
            <person name="He F."/>
            <person name="Zhang L."/>
        </authorList>
    </citation>
    <scope>UBIQUITINATION</scope>
    <scope>FUNCTION</scope>
</reference>
<reference key="37">
    <citation type="journal article" date="2010" name="PLoS Pathog.">
        <title>Optineurin negatively regulates the induction of IFNbeta in response to RNA virus infection.</title>
        <authorList>
            <person name="Mankouri J."/>
            <person name="Fragkoudis R."/>
            <person name="Richards K.H."/>
            <person name="Wetherill L.F."/>
            <person name="Harris M."/>
            <person name="Kohl A."/>
            <person name="Elliott R.M."/>
            <person name="Macdonald A."/>
        </authorList>
    </citation>
    <scope>INTERACTION WITH OPTN AND TBK1</scope>
</reference>
<reference key="38">
    <citation type="journal article" date="2011" name="J. Cell. Physiol.">
        <title>Alternative splicing of CARMA2/CARD14 transcripts generates protein variants with differential effect on NF-kappaB activation and endoplasmic reticulum stress-induced cell death.</title>
        <authorList>
            <person name="Scudiero I."/>
            <person name="Zotti T."/>
            <person name="Ferravante A."/>
            <person name="Vessichelli M."/>
            <person name="Vito P."/>
            <person name="Stilo R."/>
        </authorList>
    </citation>
    <scope>INTERACTION WITH CARD14</scope>
</reference>
<reference key="39">
    <citation type="journal article" date="2013" name="Immunity">
        <title>The autoimmunity-associated gene PTPN22 potentiates toll-like receptor-driven, type 1 interferon-dependent immunity.</title>
        <authorList>
            <person name="Wang Y."/>
            <person name="Shaked I."/>
            <person name="Stanford S.M."/>
            <person name="Zhou W."/>
            <person name="Curtsinger J.M."/>
            <person name="Mikulski Z."/>
            <person name="Shaheen Z.R."/>
            <person name="Cheng G."/>
            <person name="Sawatzke K."/>
            <person name="Campbell A.M."/>
            <person name="Auger J.L."/>
            <person name="Bilgic H."/>
            <person name="Shoyama F.M."/>
            <person name="Schmeling D.O."/>
            <person name="Balfour H.H. Jr."/>
            <person name="Hasegawa K."/>
            <person name="Chan A.C."/>
            <person name="Corbett J.A."/>
            <person name="Binstadt B.A."/>
            <person name="Mescher M.F."/>
            <person name="Ley K."/>
            <person name="Bottini N."/>
            <person name="Peterson E.J."/>
        </authorList>
    </citation>
    <scope>INTERACTION WITH PTPN22</scope>
</reference>
<reference key="40">
    <citation type="journal article" date="2013" name="J. Proteome Res.">
        <title>Toward a comprehensive characterization of a human cancer cell phosphoproteome.</title>
        <authorList>
            <person name="Zhou H."/>
            <person name="Di Palma S."/>
            <person name="Preisinger C."/>
            <person name="Peng M."/>
            <person name="Polat A.N."/>
            <person name="Heck A.J."/>
            <person name="Mohammed S."/>
        </authorList>
    </citation>
    <scope>PHOSPHORYLATION [LARGE SCALE ANALYSIS] AT SER-9</scope>
    <scope>IDENTIFICATION BY MASS SPECTROMETRY [LARGE SCALE ANALYSIS]</scope>
    <source>
        <tissue>Erythroleukemia</tissue>
    </source>
</reference>
<reference key="41">
    <citation type="journal article" date="2014" name="J. Virol.">
        <title>Hantavirus GnT elements mediate TRAF3 binding and inhibit RIG-I/TBK1-directed beta interferon transcription by blocking IRF3 phosphorylation.</title>
        <authorList>
            <person name="Matthys V.S."/>
            <person name="Cimica V."/>
            <person name="Dalrymple N.A."/>
            <person name="Glennon N.B."/>
            <person name="Bianco C."/>
            <person name="Mackow E.R."/>
        </authorList>
    </citation>
    <scope>INTERACTION WITH NEW YORK HANTAVIRUS GLYCOPROTEIN N (MICROBIAL INFECTION)</scope>
    <scope>INTERACTION WITH ANDES HANTAVIRUS GLYCOPROTEIN N (MICROBIAL INFECTION)</scope>
    <scope>INTERACTION WITH TULA HANTAVIRUS GLYCOPROTEIN N (MICROBIAL INFECTION)</scope>
</reference>
<reference key="42">
    <citation type="journal article" date="2015" name="J. Immunol.">
        <title>MAVS Promotes Inflammasome Activation by Targeting ASC for K63-Linked Ubiquitination via the E3 Ligase TRAF3.</title>
        <authorList>
            <person name="Guan K."/>
            <person name="Wei C."/>
            <person name="Zheng Z."/>
            <person name="Song T."/>
            <person name="Wu F."/>
            <person name="Zhang Y."/>
            <person name="Cao Y."/>
            <person name="Ma S."/>
            <person name="Chen W."/>
            <person name="Xu Q."/>
            <person name="Xia W."/>
            <person name="Gu J."/>
            <person name="He X."/>
            <person name="Zhong H."/>
        </authorList>
    </citation>
    <scope>FUNCTION</scope>
    <scope>CATALYTIC ACTIVITY</scope>
    <scope>SUBCELLULAR LOCATION</scope>
    <scope>MUTAGENESIS OF CYS-68 AND HIS-70</scope>
</reference>
<reference key="43">
    <citation type="journal article" date="2016" name="J. Biol. Chem.">
        <title>Citrobacter rodentium NleB protein inhibits tumor necrosis factor (TNF) receptor-associated factor 3 (TRAF3) ubiquitination to reduce host type I interferon production.</title>
        <authorList>
            <person name="Gao X."/>
            <person name="Pham T.H."/>
            <person name="Feuerbacher L.A."/>
            <person name="Chen K."/>
            <person name="Hays M.P."/>
            <person name="Singh G."/>
            <person name="Rueter C."/>
            <person name="Hurtado-Guerrero R."/>
            <person name="Hardwidge P.R."/>
        </authorList>
    </citation>
    <scope>INTERACTION WITH GAPDH</scope>
</reference>
<reference key="44">
    <citation type="journal article" date="2016" name="Immunity">
        <title>Ubiquitination of Innate Immune Regulator TRAF3 Orchestrates Expulsion of Intracellular Bacteria by Exocyst Complex.</title>
        <authorList>
            <person name="Miao Y."/>
            <person name="Wu J."/>
            <person name="Abraham S.N."/>
        </authorList>
    </citation>
    <scope>FUNCTION</scope>
    <scope>UBIQUITINATION AT LYS-168</scope>
    <scope>MUTAGENESIS OF LYS-168</scope>
    <scope>INTERACTION WITH RALGDS</scope>
</reference>
<reference key="45">
    <citation type="journal article" date="2017" name="Biochem. J.">
        <title>DDX3 directly regulates TRAF3 ubiquitination and acts as a scaffold to co-ordinate assembly of signalling complexes downstream from MAVS.</title>
        <authorList>
            <person name="Gu L."/>
            <person name="Fullam A."/>
            <person name="McCormack N."/>
            <person name="Hoehn Y."/>
            <person name="Schroeder M."/>
        </authorList>
    </citation>
    <scope>INTERACTION WITH DDX3X; IKBKE; IRF3 AND MAVS</scope>
    <scope>UBIQUITINATION</scope>
    <scope>MUTAGENESIS OF 68-CYS--HIS-70</scope>
</reference>
<reference key="46">
    <citation type="journal article" date="2020" name="Protein Cell">
        <title>TRIM35 mediates protection against influenza infection by activating TRAF3 and degrading viral PB2.</title>
        <authorList>
            <person name="Sun N."/>
            <person name="Jiang L."/>
            <person name="Ye M."/>
            <person name="Wang Y."/>
            <person name="Wang G."/>
            <person name="Wan X."/>
            <person name="Zhao Y."/>
            <person name="Wen X."/>
            <person name="Liang L."/>
            <person name="Ma S."/>
            <person name="Liu L."/>
            <person name="Bu Z."/>
            <person name="Chen H."/>
            <person name="Li C."/>
        </authorList>
    </citation>
    <scope>FUNCTION</scope>
    <scope>INTERACTION WITH TRIM35</scope>
    <scope>SUBCELLULAR LOCATION</scope>
    <scope>UBIQUITINATION</scope>
</reference>
<reference key="47">
    <citation type="journal article" date="2021" name="J. Virol.">
        <title>Enterovirus D68 Protease 2Apro Targets TRAF3 To Subvert Host Innate Immune Responses.</title>
        <authorList>
            <person name="Kang J."/>
            <person name="Pang Z."/>
            <person name="Zhou Z."/>
            <person name="Li X."/>
            <person name="Liu S."/>
            <person name="Cheng J."/>
            <person name="Liu P."/>
            <person name="Tan W."/>
            <person name="Wang Z."/>
            <person name="Wang T."/>
        </authorList>
    </citation>
    <scope>FUNCTION</scope>
    <scope>CLEAVAGE BY ENTEROVIRUS D68 PROTEASE 2A (MICROBIAL INFECTION)</scope>
    <scope>MUTAGENESIS OF GLY-462</scope>
</reference>
<reference key="48">
    <citation type="journal article" date="2021" name="J. Immunol.">
        <title>Inducible ATP1B1 Upregulates Antiviral Innate Immune Responses by the Ubiquitination of TRAF3 and TRAF6.</title>
        <authorList>
            <person name="Cao W."/>
            <person name="Guo Y."/>
            <person name="Cheng Z."/>
            <person name="Xu G."/>
            <person name="Zuo Q."/>
            <person name="Nie L."/>
            <person name="Huang Y."/>
            <person name="Liu S."/>
            <person name="Zhu Y."/>
        </authorList>
    </citation>
    <scope>FUNCTION</scope>
    <scope>SUBCELLULAR LOCATION</scope>
    <scope>INTERACTION WITH ATP1B1</scope>
    <scope>UBIQUITINATION</scope>
</reference>
<reference key="49">
    <citation type="journal article" date="2021" name="Nat. Commun.">
        <title>E3 ligase Nedd4l promotes antiviral innate immunity by catalyzing K29-linked cysteine ubiquitination of TRAF3.</title>
        <authorList>
            <person name="Gao P."/>
            <person name="Ma X."/>
            <person name="Yuan M."/>
            <person name="Yi Y."/>
            <person name="Liu G."/>
            <person name="Wen M."/>
            <person name="Jiang W."/>
            <person name="Ji R."/>
            <person name="Zhu L."/>
            <person name="Tang Z."/>
            <person name="Yu Q."/>
            <person name="Xu J."/>
            <person name="Yang R."/>
            <person name="Xia S."/>
            <person name="Yang M."/>
            <person name="Pan J."/>
            <person name="Yuan H."/>
            <person name="An H."/>
        </authorList>
    </citation>
    <scope>FUNCTION</scope>
    <scope>UBIQUITINATION AT CYS-56 AND CYS-124 BY NEDD4L</scope>
    <scope>MUTAGENESIS OF CYS-56 AND CYS-124</scope>
</reference>
<reference key="50">
    <citation type="journal article" date="2023" name="J. Med. Virol.">
        <title>FBXO11 amplifies type I interferon signaling to exert antiviral effects by facilitating the assemble of TRAF3-TBK1-IRF3 complex.</title>
        <authorList>
            <person name="Gao L."/>
            <person name="Gao Y."/>
            <person name="Han K."/>
            <person name="Wang Z."/>
            <person name="Meng F."/>
            <person name="Liu J."/>
            <person name="Zhao X."/>
            <person name="Shao Y."/>
            <person name="Shen J."/>
            <person name="Sun W."/>
            <person name="Liu Y."/>
            <person name="Xu H."/>
            <person name="Du X."/>
            <person name="Li J."/>
            <person name="Qin F.X."/>
        </authorList>
    </citation>
    <scope>INTERACTION WITH FBXO11</scope>
    <scope>UBIQUITINATION</scope>
</reference>
<reference key="51">
    <citation type="journal article" date="2000" name="Proc. Natl. Acad. Sci. U.S.A.">
        <title>Molecular basis for CD40 signaling mediated by TRAF3.</title>
        <authorList>
            <person name="Ni C.Z."/>
            <person name="Welsh K."/>
            <person name="Leo E."/>
            <person name="Chiou C.K."/>
            <person name="Wu H."/>
            <person name="Reed J.C."/>
            <person name="Ely K.R."/>
        </authorList>
    </citation>
    <scope>X-RAY CRYSTALLOGRAPHY (2.8 ANGSTROMS) OF 341-568</scope>
    <scope>X-RAY CRYSTALLOGRAPHY (3.5 ANGSTROMS) OF 341-568 IN COMPLEX WITH TNFRSF5</scope>
</reference>
<reference key="52">
    <citation type="journal article" date="2002" name="Structure">
        <title>Downstream regulator TANK binds to the CD40 recognition site on TRAF3.</title>
        <authorList>
            <person name="Li C."/>
            <person name="Ni C.Z."/>
            <person name="Havert M.L."/>
            <person name="Cabezas E."/>
            <person name="He J."/>
            <person name="Kaiser D."/>
            <person name="Reed J.C."/>
            <person name="Satterthwait A.C."/>
            <person name="Cheng G."/>
            <person name="Ely K.R."/>
        </authorList>
    </citation>
    <scope>X-RAY CRYSTALLOGRAPHY (3.5 ANGSTROMS) OF 377-568 IN COMPLEX WITH TANK</scope>
    <scope>X-RAY CRYSTALLOGRAPHY (2.9 ANGSTROMS) OF 377-568 IN COMPLEX WITH TNFRSF5</scope>
</reference>
<reference key="53">
    <citation type="journal article" date="2003" name="J. Biol. Chem.">
        <title>Structurally distinct recognition motifs in lymphotoxin-beta receptor and CD40 for tumor necrosis factor receptor-associated factor (TRAF)-mediated signaling.</title>
        <authorList>
            <person name="Li C."/>
            <person name="Norris P.S."/>
            <person name="Ni C.Z."/>
            <person name="Havert M.L."/>
            <person name="Chiong E.M."/>
            <person name="Tran B.R."/>
            <person name="Cabezas E."/>
            <person name="Reed J.C."/>
            <person name="Satterthwait A.C."/>
            <person name="Ware C.F."/>
            <person name="Ely K.R."/>
        </authorList>
    </citation>
    <scope>X-RAY CRYSTALLOGRAPHY (3.5 ANGSTROMS) OF 377-568 IN COMPLEX WITH LTBR</scope>
    <scope>MUTAGENESIS OF TYR-459; PHE-512 AND PHE-521</scope>
    <scope>INTERACTION WITH TANK AND CD40</scope>
    <scope>SUBUNIT</scope>
</reference>
<reference key="54">
    <citation type="journal article" date="2004" name="J. Immunol.">
        <title>Key molecular contacts promote recognition of the BAFF receptor by TNF receptor-associated factor 3: implications for intracellular signaling regulation.</title>
        <authorList>
            <person name="Ni C.Z."/>
            <person name="Oganesyan G."/>
            <person name="Welsh K."/>
            <person name="Zhu X."/>
            <person name="Reed J.C."/>
            <person name="Satterthwait A.C."/>
            <person name="Cheng G."/>
            <person name="Ely K.R."/>
        </authorList>
    </citation>
    <scope>X-RAY CRYSTALLOGRAPHY (2.7 ANGSTROMS) OF 377-568 IN COMPLEX WITH TNFRSF13C PEPTIDE</scope>
    <scope>SUBUNIT</scope>
    <scope>INTERACTION WITH TNFRSF13C</scope>
</reference>
<reference key="55">
    <citation type="journal article" date="2005" name="J. Biol. Chem.">
        <title>LMP1 protein from the Epstein-Barr virus is a structural CD40 decoy in B lymphocytes for binding to TRAF3.</title>
        <authorList>
            <person name="Wu S."/>
            <person name="Xie P."/>
            <person name="Welsh K."/>
            <person name="Li C."/>
            <person name="Ni C.Z."/>
            <person name="Zhu X."/>
            <person name="Reed J.C."/>
            <person name="Satterthwait A.C."/>
            <person name="Bishop G.A."/>
            <person name="Ely K.R."/>
        </authorList>
    </citation>
    <scope>X-RAY CRYSTALLOGRAPHY (2.8 ANGSTROMS) OF 377-568 IN COMPLEX WITH EPSTEIN-BARR VIRUS PROTEIN LMP1 (MICROBIAL INFECTION)</scope>
    <scope>SUBUNIT</scope>
</reference>
<reference key="56">
    <citation type="submission" date="2008-02" db="PDB data bank">
        <title>Solution structure of the zinc finger, C3HC4 type (RING finger) domain of TNF receptor-associated factor 3.</title>
        <authorList>
            <consortium name="RIKEN structural genomics initiative (RSGI)"/>
        </authorList>
    </citation>
    <scope>STRUCTURE BY NMR OF 43-101</scope>
</reference>
<reference key="57">
    <citation type="journal article" date="2010" name="Immunity">
        <title>Human TRAF3 adaptor molecule deficiency leads to impaired Toll-like receptor 3 response and susceptibility to herpes simplex encephalitis.</title>
        <authorList>
            <person name="Perez de Diego R."/>
            <person name="Sancho-Shimizu V."/>
            <person name="Lorenzo L."/>
            <person name="Puel A."/>
            <person name="Plancoulaine S."/>
            <person name="Picard C."/>
            <person name="Herman M."/>
            <person name="Cardon A."/>
            <person name="Durandy A."/>
            <person name="Bustamante J."/>
            <person name="Vallabhapurapu S."/>
            <person name="Bravo J."/>
            <person name="Warnatz K."/>
            <person name="Chaix Y."/>
            <person name="Cascarrigny F."/>
            <person name="Lebon P."/>
            <person name="Rozenberg F."/>
            <person name="Karin M."/>
            <person name="Tardieu M."/>
            <person name="Al-Muhsen S."/>
            <person name="Jouanguy E."/>
            <person name="Zhang S.Y."/>
            <person name="Abel L."/>
            <person name="Casanova J.L."/>
        </authorList>
    </citation>
    <scope>VARIANT IMD132A TRP-118</scope>
    <scope>INVOLVEMENT IN IMD132A</scope>
</reference>
<reference key="58">
    <citation type="journal article" date="2022" name="Open Forum Infect. Dis.">
        <title>Dominant negative TRAF3 variant with recurrent Mycobacterium abscessus infection and bronchiectasis.</title>
        <authorList>
            <person name="Liew M.F."/>
            <person name="Lim H.F."/>
            <person name="Liang M.C."/>
            <person name="Lim I."/>
            <person name="Tan Z."/>
            <person name="Tan R.Y.M."/>
            <person name="Sam Q.H."/>
            <person name="Soe W.M."/>
            <person name="Tay S.H."/>
            <person name="Xu S."/>
            <person name="Chang M.W."/>
            <person name="Foo R."/>
            <person name="Soong T.W."/>
            <person name="Ravikumar S."/>
            <person name="Chai L.Y.A."/>
        </authorList>
    </citation>
    <scope>VARIANT IMD132A TRP-338</scope>
    <scope>INVOLVEMENT IN IMD132A</scope>
    <scope>CHARACTERIZATION OF VARIANT IMD132A TRP-338</scope>
</reference>
<reference key="59">
    <citation type="journal article" date="2022" name="Sci. Immunol.">
        <title>Immunodeficiency, autoimmunity, and increased risk of B cell malignancy in humans with TRAF3 mutations.</title>
        <authorList>
            <person name="Rae W."/>
            <person name="Sowerby J.M."/>
            <person name="Verhoeven D."/>
            <person name="Youssef M."/>
            <person name="Kotagiri P."/>
            <person name="Savinykh N."/>
            <person name="Coomber E.L."/>
            <person name="Boneparth A."/>
            <person name="Chan A."/>
            <person name="Gong C."/>
            <person name="Jansen M.H."/>
            <person name="du Long R."/>
            <person name="Santilli G."/>
            <person name="Simeoni I."/>
            <person name="Stephens J."/>
            <person name="Wu K."/>
            <person name="Zinicola M."/>
            <person name="Allen H.L."/>
            <person name="Baxendale H."/>
            <person name="Kumararatne D."/>
            <person name="Gkrania-Klotsas E."/>
            <person name="Scheffler Mendoza S.C."/>
            <person name="Yamazaki-Nakashimada M.A."/>
            <person name="Ruiz L.B."/>
            <person name="Rojas-Maruri C.M."/>
            <person name="Lugo Reyes S.O."/>
            <person name="Lyons P.A."/>
            <person name="Williams A.P."/>
            <person name="Hodson D.J."/>
            <person name="Bishop G.A."/>
            <person name="Thrasher A.J."/>
            <person name="Thomas D.C."/>
            <person name="Murphy M.P."/>
            <person name="Vyse T.J."/>
            <person name="Milner J.D."/>
            <person name="Kuijpers T.W."/>
            <person name="Smith K.G.C."/>
        </authorList>
    </citation>
    <scope>VARIANTS IMD132B 163-ARG--PRO-568 DEL AND 425-TYR--PRO-568 DEL</scope>
    <scope>CHARACTERIZATION OF VARIANTS IMD132B 163-ARG--PRO-568 DEL AND 425-TYR--PRO-568 DEL</scope>
    <scope>INVOLVEMENT IN IMD132B</scope>
</reference>
<reference key="60">
    <citation type="journal article" date="2024" name="J. Clin. Immunol.">
        <title>Heterozygous Predicted Loss-of-function Variants of TRAF3 in Patients with Common Variable Immunodeficiency.</title>
        <authorList>
            <person name="Urban B."/>
            <person name="Batlle-Maso L."/>
            <person name="Perurena-Prieto J."/>
            <person name="Garcia-Prat M."/>
            <person name="Parra-Martinez A."/>
            <person name="Aguilo-Cucurull A."/>
            <person name="Martinez-Gallo M."/>
            <person name="Moushib L."/>
            <person name="Antolin M."/>
            <person name="Riviere J.G."/>
            <person name="Soler-Palacin P."/>
            <person name="Dieli-Crimi R."/>
            <person name="Franco-Jarava C."/>
            <person name="Colobran R."/>
        </authorList>
    </citation>
    <scope>VARIANTS IMD132B 163-ARG--PRO-568 DEL AND 407-GLN--PRO-568 DEL</scope>
    <scope>INVOLVEMENT IN IMD132B</scope>
</reference>
<sequence length="568" mass="64490">MESSKKMDSPGALQTNPPLKLHTDRSAGTPVFVPEQGGYKEKFVKTVEDKYKCEKCHLVLCSPKQTECGHRFCESCMAALLSSSSPKCTACQESIVKDKVFKDNCCKREILALQIYCRNESRGCAEQLMLGHLLVHLKNDCHFEELPCVRPDCKEKVLRKDLRDHVEKACKYREATCSHCKSQVPMIALQKHEDTDCPCVVVSCPHKCSVQTLLRSELSAHLSECVNAPSTCSFKRYGCVFQGTNQQIKAHEASSAVQHVNLLKEWSNSLEKKVSLLQNESVEKNKSIQSLHNQICSFEIEIERQKEMLRNNESKILHLQRVIDSQAEKLKELDKEIRPFRQNWEEADSMKSSVESLQNRVTELESVDKSAGQVARNTGLLESQLSRHDQMLSVHDIRLADMDLRFQVLETASYNGVLIWKIRDYKRRKQEAVMGKTLSLYSQPFYTGYFGYKMCARVYLNGDGMGKGTHLSLFFVIMRGEYDALLPWPFKQKVTLMLMDQGSSRRHLGDAFKPDPNSSSFKKPTGEMNIASGCPVFVAQTVLENGTYIKDDTIFIKVIVDTSDLPDP</sequence>
<keyword id="KW-0002">3D-structure</keyword>
<keyword id="KW-0025">Alternative splicing</keyword>
<keyword id="KW-0053">Apoptosis</keyword>
<keyword id="KW-0175">Coiled coil</keyword>
<keyword id="KW-0963">Cytoplasm</keyword>
<keyword id="KW-0225">Disease variant</keyword>
<keyword id="KW-0967">Endosome</keyword>
<keyword id="KW-0945">Host-virus interaction</keyword>
<keyword id="KW-0391">Immunity</keyword>
<keyword id="KW-1017">Isopeptide bond</keyword>
<keyword id="KW-0479">Metal-binding</keyword>
<keyword id="KW-0496">Mitochondrion</keyword>
<keyword id="KW-0597">Phosphoprotein</keyword>
<keyword id="KW-1267">Proteomics identification</keyword>
<keyword id="KW-1185">Reference proteome</keyword>
<keyword id="KW-0677">Repeat</keyword>
<keyword id="KW-0882">Thioester bond</keyword>
<keyword id="KW-0808">Transferase</keyword>
<keyword id="KW-0832">Ubl conjugation</keyword>
<keyword id="KW-0833">Ubl conjugation pathway</keyword>
<keyword id="KW-0862">Zinc</keyword>
<keyword id="KW-0863">Zinc-finger</keyword>
<evidence type="ECO:0000250" key="1">
    <source>
        <dbReference type="UniProtKB" id="Q60803"/>
    </source>
</evidence>
<evidence type="ECO:0000255" key="2"/>
<evidence type="ECO:0000255" key="3">
    <source>
        <dbReference type="PROSITE-ProRule" id="PRU00129"/>
    </source>
</evidence>
<evidence type="ECO:0000255" key="4">
    <source>
        <dbReference type="PROSITE-ProRule" id="PRU00175"/>
    </source>
</evidence>
<evidence type="ECO:0000255" key="5">
    <source>
        <dbReference type="PROSITE-ProRule" id="PRU00207"/>
    </source>
</evidence>
<evidence type="ECO:0000256" key="6">
    <source>
        <dbReference type="SAM" id="MobiDB-lite"/>
    </source>
</evidence>
<evidence type="ECO:0000269" key="7">
    <source>
    </source>
</evidence>
<evidence type="ECO:0000269" key="8">
    <source>
    </source>
</evidence>
<evidence type="ECO:0000269" key="9">
    <source>
    </source>
</evidence>
<evidence type="ECO:0000269" key="10">
    <source>
    </source>
</evidence>
<evidence type="ECO:0000269" key="11">
    <source>
    </source>
</evidence>
<evidence type="ECO:0000269" key="12">
    <source>
    </source>
</evidence>
<evidence type="ECO:0000269" key="13">
    <source>
    </source>
</evidence>
<evidence type="ECO:0000269" key="14">
    <source>
    </source>
</evidence>
<evidence type="ECO:0000269" key="15">
    <source>
    </source>
</evidence>
<evidence type="ECO:0000269" key="16">
    <source>
    </source>
</evidence>
<evidence type="ECO:0000269" key="17">
    <source>
    </source>
</evidence>
<evidence type="ECO:0000269" key="18">
    <source>
    </source>
</evidence>
<evidence type="ECO:0000269" key="19">
    <source>
    </source>
</evidence>
<evidence type="ECO:0000269" key="20">
    <source>
    </source>
</evidence>
<evidence type="ECO:0000269" key="21">
    <source>
    </source>
</evidence>
<evidence type="ECO:0000269" key="22">
    <source>
    </source>
</evidence>
<evidence type="ECO:0000269" key="23">
    <source>
    </source>
</evidence>
<evidence type="ECO:0000269" key="24">
    <source>
    </source>
</evidence>
<evidence type="ECO:0000269" key="25">
    <source>
    </source>
</evidence>
<evidence type="ECO:0000269" key="26">
    <source>
    </source>
</evidence>
<evidence type="ECO:0000269" key="27">
    <source>
    </source>
</evidence>
<evidence type="ECO:0000269" key="28">
    <source>
    </source>
</evidence>
<evidence type="ECO:0000269" key="29">
    <source>
    </source>
</evidence>
<evidence type="ECO:0000269" key="30">
    <source>
    </source>
</evidence>
<evidence type="ECO:0000269" key="31">
    <source>
    </source>
</evidence>
<evidence type="ECO:0000269" key="32">
    <source>
    </source>
</evidence>
<evidence type="ECO:0000269" key="33">
    <source>
    </source>
</evidence>
<evidence type="ECO:0000269" key="34">
    <source>
    </source>
</evidence>
<evidence type="ECO:0000269" key="35">
    <source>
    </source>
</evidence>
<evidence type="ECO:0000269" key="36">
    <source>
    </source>
</evidence>
<evidence type="ECO:0000269" key="37">
    <source>
    </source>
</evidence>
<evidence type="ECO:0000269" key="38">
    <source>
    </source>
</evidence>
<evidence type="ECO:0000269" key="39">
    <source>
    </source>
</evidence>
<evidence type="ECO:0000269" key="40">
    <source>
    </source>
</evidence>
<evidence type="ECO:0000269" key="41">
    <source>
    </source>
</evidence>
<evidence type="ECO:0000269" key="42">
    <source>
    </source>
</evidence>
<evidence type="ECO:0000269" key="43">
    <source>
    </source>
</evidence>
<evidence type="ECO:0000269" key="44">
    <source>
    </source>
</evidence>
<evidence type="ECO:0000269" key="45">
    <source>
    </source>
</evidence>
<evidence type="ECO:0000269" key="46">
    <source>
    </source>
</evidence>
<evidence type="ECO:0000269" key="47">
    <source>
    </source>
</evidence>
<evidence type="ECO:0000269" key="48">
    <source>
    </source>
</evidence>
<evidence type="ECO:0000269" key="49">
    <source>
    </source>
</evidence>
<evidence type="ECO:0000269" key="50">
    <source>
    </source>
</evidence>
<evidence type="ECO:0000269" key="51">
    <source>
    </source>
</evidence>
<evidence type="ECO:0000269" key="52">
    <source>
    </source>
</evidence>
<evidence type="ECO:0000269" key="53">
    <source>
    </source>
</evidence>
<evidence type="ECO:0000269" key="54">
    <source>
    </source>
</evidence>
<evidence type="ECO:0000269" key="55">
    <source>
    </source>
</evidence>
<evidence type="ECO:0000269" key="56">
    <source>
    </source>
</evidence>
<evidence type="ECO:0000269" key="57">
    <source>
    </source>
</evidence>
<evidence type="ECO:0000269" key="58">
    <source>
    </source>
</evidence>
<evidence type="ECO:0000269" key="59">
    <source>
    </source>
</evidence>
<evidence type="ECO:0000303" key="60">
    <source>
    </source>
</evidence>
<evidence type="ECO:0000303" key="61">
    <source>
    </source>
</evidence>
<evidence type="ECO:0000303" key="62">
    <source>
    </source>
</evidence>
<evidence type="ECO:0000303" key="63">
    <source>
    </source>
</evidence>
<evidence type="ECO:0000305" key="64"/>
<evidence type="ECO:0000312" key="65">
    <source>
        <dbReference type="HGNC" id="HGNC:12033"/>
    </source>
</evidence>
<evidence type="ECO:0007744" key="66">
    <source>
    </source>
</evidence>
<evidence type="ECO:0007829" key="67">
    <source>
        <dbReference type="PDB" id="1FLK"/>
    </source>
</evidence>
<evidence type="ECO:0007829" key="68">
    <source>
        <dbReference type="PDB" id="1FLL"/>
    </source>
</evidence>
<evidence type="ECO:0007829" key="69">
    <source>
        <dbReference type="PDB" id="1L0A"/>
    </source>
</evidence>
<evidence type="ECO:0007829" key="70">
    <source>
        <dbReference type="PDB" id="1ZMS"/>
    </source>
</evidence>
<evidence type="ECO:0007829" key="71">
    <source>
        <dbReference type="PDB" id="2ECY"/>
    </source>
</evidence>
<evidence type="ECO:0007829" key="72">
    <source>
        <dbReference type="PDB" id="8T5P"/>
    </source>
</evidence>
<organism>
    <name type="scientific">Homo sapiens</name>
    <name type="common">Human</name>
    <dbReference type="NCBI Taxonomy" id="9606"/>
    <lineage>
        <taxon>Eukaryota</taxon>
        <taxon>Metazoa</taxon>
        <taxon>Chordata</taxon>
        <taxon>Craniata</taxon>
        <taxon>Vertebrata</taxon>
        <taxon>Euteleostomi</taxon>
        <taxon>Mammalia</taxon>
        <taxon>Eutheria</taxon>
        <taxon>Euarchontoglires</taxon>
        <taxon>Primates</taxon>
        <taxon>Haplorrhini</taxon>
        <taxon>Catarrhini</taxon>
        <taxon>Hominidae</taxon>
        <taxon>Homo</taxon>
    </lineage>
</organism>
<comment type="function">
    <text evidence="17 18 21 25 27 29 34 37 38 39 40 41">Cytoplasmic E3 ubiquitin ligase that regulates various signaling pathways, such as the NF-kappa-B, mitogen-activated protein kinase (MAPK) and interferon regulatory factor (IRF) pathways, and thus controls a lot of biological processes in both immune and non-immune cell types (PubMed:33148796, PubMed:33608556). In TLR and RLR signaling pathways, acts as an E3 ubiquitin ligase promoting the synthesis of 'Lys-63'-linked polyubiquitin chains on several substrates such as ASC that lead to the activation of the type I interferon response or the inflammasome (PubMed:25847972, PubMed:27980081). Following the activation of certain TLRs such as TLR4, acts as a negative NF-kappa-B regulator, possibly to avoid unregulated inflammatory response, and its degradation via 'Lys-48'-linked polyubiquitination is required for MAPK activation and production of inflammatory cytokines. Alternatively, when TLR4 orchestrates bacterial expulsion, TRAF3 undergoes 'Lys-33'-linked polyubiquitination and subsequently binds to RALGDS, mobilizing the exocyst complex to rapidly expel intracellular bacteria back for clearance (PubMed:27438768). Also acts as a constitutive negative regulator of the alternative NF-kappa-B pathway, which controls B-cell survival and lymphoid organ development. Required for normal antibody isotype switching from IgM to IgG. Plays a role T-cell dependent immune responses. Down-regulates proteolytic processing of NFKB2, and thereby inhibits non-canonical activation of NF-kappa-B. Promotes ubiquitination and proteasomal degradation of MAP3K14.</text>
</comment>
<comment type="catalytic activity">
    <reaction evidence="34">
        <text>S-ubiquitinyl-[E2 ubiquitin-conjugating enzyme]-L-cysteine + [acceptor protein]-L-lysine = [E2 ubiquitin-conjugating enzyme]-L-cysteine + N(6)-ubiquitinyl-[acceptor protein]-L-lysine.</text>
        <dbReference type="EC" id="2.3.2.27"/>
    </reaction>
</comment>
<comment type="subunit">
    <text evidence="1 7 8 9 10 11 12 13 14 15 16 17 18 19 20 21 23 24 26 27 28 31 32 35 36 37 38 44 46 47 48 50 51 52 53 54 55 56 57 58 59">Homotrimer. Heterotrimer with TRAF2 and TRAF5. Interacts with LTBR/TNFRSF3, TNFRSF4, TNFRSF5/CD40, TNFRSF8/CD30, TNFRSF13C TNFRSF17/BCMA, TLR4 and EDAR. Interacts with MAP3K5, MAP3K14, TRAIP/TRIP, TDP2/TTRAP, TANK/ITRAF and TRAF3IP1. Interaction with TNFRSF5/CD40 is modulated by TANK/ITRAF, which competes for the same binding site. Interacts with TICAM1. Interacts with TRAFD1. Interacts with OTUB1, OTUB2 and OTUD5. Interacts with RNF216, OPTN and TBK1. Identified in a complex with TRAF2, MAP3K14 and BIRC3. Interacts with BIRC2 and BIRC3. Upon exposure to bacterial lipopolysaccharide (LPS), recruited to a transient complex containing TLR4, TRAF3, TRAF6, IKBKG, MAP3K7, MYD88, TICAM1, BIRC2, BIRC3 and UBE2N (By similarity). Interacts (via RING-type zinc finger domain) with SRC. Interacts with CARD14. Interacts (via MATH domain) with PTPN22; the interaction promotes TRAF3 polyubiquitination (PubMed:23871208). Interacts with MAVS (PubMed:19893624, PubMed:27980081). Directly interacts with DDX3X; this interaction stimulates TRAF3 'Lys-63' ubiquitination (PubMed:27980081). Interacts with IRF3 (PubMed:27980081). Interacts with IKBKE in the course of Sendai virus infection (PubMed:27980081). Interacts with TRIM35 (PubMed:32562145). Interacts with GAPDH; promoting TRAF3 ubiquitination (PubMed:27387501). Interacts with PPP3CA and PPP3CB (By similarity). Interacts with ATP1B1; promoting TRAF3 ubiquitination (PubMed:27387501). Interacts with RALGDS (PubMed:27438768). Interacts with FBXO11 (PubMed:36897010).</text>
</comment>
<comment type="subunit">
    <text evidence="22 33">(Microbial infection) Interacts (via N-terminus) with New York hantavirus glycoprotein N (via C-terminus); this interaction inhibits the formation of TRAF3-TBK1 complexes.</text>
</comment>
<comment type="subunit">
    <text evidence="33">(Microbial infection) Interacts with Andes hantavirus glycoprotein N (via C-terminus); this interaction inhibits the formation of TRAF3-TBK1 complexes.</text>
</comment>
<comment type="subunit">
    <text evidence="33">(Microbial infection) Interacts with Tula hantavirus glycoprotein N (via C-terminus); this interaction inhibits the formation of TRAF3-TBK1 complexes.</text>
</comment>
<comment type="subunit">
    <text evidence="49">(Microbial infection) Interacts with Epstein-Barr virus protein LMP1.</text>
</comment>
<comment type="interaction">
    <interactant intactId="EBI-357631">
        <id>Q13114</id>
    </interactant>
    <interactant intactId="EBI-10962548">
        <id>Q8N9N2-2</id>
        <label>ASCC1</label>
    </interactant>
    <organismsDiffer>false</organismsDiffer>
    <experiments>3</experiments>
</comment>
<comment type="interaction">
    <interactant intactId="EBI-357631">
        <id>Q13114</id>
    </interactant>
    <interactant intactId="EBI-12191873">
        <id>Q86UB2</id>
        <label>BIVM</label>
    </interactant>
    <organismsDiffer>false</organismsDiffer>
    <experiments>6</experiments>
</comment>
<comment type="interaction">
    <interactant intactId="EBI-357631">
        <id>Q13114</id>
    </interactant>
    <interactant intactId="EBI-365980">
        <id>P15056</id>
        <label>BRAF</label>
    </interactant>
    <organismsDiffer>false</organismsDiffer>
    <experiments>2</experiments>
</comment>
<comment type="interaction">
    <interactant intactId="EBI-357631">
        <id>Q13114</id>
    </interactant>
    <interactant intactId="EBI-744052">
        <id>Q5T681</id>
        <label>C10orf62</label>
    </interactant>
    <organismsDiffer>false</organismsDiffer>
    <experiments>3</experiments>
</comment>
<comment type="interaction">
    <interactant intactId="EBI-357631">
        <id>Q13114</id>
    </interactant>
    <interactant intactId="EBI-10961312">
        <id>Q8IYE1</id>
        <label>CCDC13</label>
    </interactant>
    <organismsDiffer>false</organismsDiffer>
    <experiments>3</experiments>
</comment>
<comment type="interaction">
    <interactant intactId="EBI-357631">
        <id>Q13114</id>
    </interactant>
    <interactant intactId="EBI-10179526">
        <id>Q52MB2</id>
        <label>CCDC184</label>
    </interactant>
    <organismsDiffer>false</organismsDiffer>
    <experiments>3</experiments>
</comment>
<comment type="interaction">
    <interactant intactId="EBI-357631">
        <id>Q13114</id>
    </interactant>
    <interactant intactId="EBI-525714">
        <id>P25942</id>
        <label>CD40</label>
    </interactant>
    <organismsDiffer>false</organismsDiffer>
    <experiments>3</experiments>
</comment>
<comment type="interaction">
    <interactant intactId="EBI-357631">
        <id>Q13114</id>
    </interactant>
    <interactant intactId="EBI-295634">
        <id>Q16543</id>
        <label>CDC37</label>
    </interactant>
    <organismsDiffer>false</organismsDiffer>
    <experiments>3</experiments>
</comment>
<comment type="interaction">
    <interactant intactId="EBI-357631">
        <id>Q13114</id>
    </interactant>
    <interactant intactId="EBI-526033">
        <id>Q9HAV5</id>
        <label>EDA2R</label>
    </interactant>
    <organismsDiffer>false</organismsDiffer>
    <experiments>3</experiments>
</comment>
<comment type="interaction">
    <interactant intactId="EBI-357631">
        <id>Q13114</id>
    </interactant>
    <interactant intactId="EBI-2339665">
        <id>Q9Y692</id>
        <label>GMEB1</label>
    </interactant>
    <organismsDiffer>false</organismsDiffer>
    <experiments>2</experiments>
</comment>
<comment type="interaction">
    <interactant intactId="EBI-357631">
        <id>Q13114</id>
    </interactant>
    <interactant intactId="EBI-948296">
        <id>Q9UKD1</id>
        <label>GMEB2</label>
    </interactant>
    <organismsDiffer>false</organismsDiffer>
    <experiments>3</experiments>
</comment>
<comment type="interaction">
    <interactant intactId="EBI-357631">
        <id>Q13114</id>
    </interactant>
    <interactant intactId="EBI-747101">
        <id>Q9Y547</id>
        <label>IFT25</label>
    </interactant>
    <organismsDiffer>false</organismsDiffer>
    <experiments>3</experiments>
</comment>
<comment type="interaction">
    <interactant intactId="EBI-357631">
        <id>Q13114</id>
    </interactant>
    <interactant intactId="EBI-10990676">
        <id>Q96PC2</id>
        <label>IP6K3</label>
    </interactant>
    <organismsDiffer>false</organismsDiffer>
    <experiments>5</experiments>
</comment>
<comment type="interaction">
    <interactant intactId="EBI-357631">
        <id>Q13114</id>
    </interactant>
    <interactant intactId="EBI-739832">
        <id>Q8TBB1</id>
        <label>LNX1</label>
    </interactant>
    <organismsDiffer>false</organismsDiffer>
    <experiments>3</experiments>
</comment>
<comment type="interaction">
    <interactant intactId="EBI-357631">
        <id>Q13114</id>
    </interactant>
    <interactant intactId="EBI-3509981">
        <id>P36941</id>
        <label>LTBR</label>
    </interactant>
    <organismsDiffer>false</organismsDiffer>
    <experiments>4</experiments>
</comment>
<comment type="interaction">
    <interactant intactId="EBI-357631">
        <id>Q13114</id>
    </interactant>
    <interactant intactId="EBI-358011">
        <id>Q99558</id>
        <label>MAP3K14</label>
    </interactant>
    <organismsDiffer>false</organismsDiffer>
    <experiments>9</experiments>
</comment>
<comment type="interaction">
    <interactant intactId="EBI-357631">
        <id>Q13114</id>
    </interactant>
    <interactant intactId="EBI-741158">
        <id>Q96HA8</id>
        <label>NTAQ1</label>
    </interactant>
    <organismsDiffer>false</organismsDiffer>
    <experiments>3</experiments>
</comment>
<comment type="interaction">
    <interactant intactId="EBI-357631">
        <id>Q13114</id>
    </interactant>
    <interactant intactId="EBI-10239064">
        <id>Q17RL8</id>
        <label>PDZD4</label>
    </interactant>
    <organismsDiffer>false</organismsDiffer>
    <experiments>3</experiments>
</comment>
<comment type="interaction">
    <interactant intactId="EBI-357631">
        <id>Q13114</id>
    </interactant>
    <interactant intactId="EBI-348567">
        <id>O75928-2</id>
        <label>PIAS2</label>
    </interactant>
    <organismsDiffer>false</organismsDiffer>
    <experiments>3</experiments>
</comment>
<comment type="interaction">
    <interactant intactId="EBI-357631">
        <id>Q13114</id>
    </interactant>
    <interactant intactId="EBI-11956563">
        <id>Q96HA1-2</id>
        <label>POM121</label>
    </interactant>
    <organismsDiffer>false</organismsDiffer>
    <experiments>3</experiments>
</comment>
<comment type="interaction">
    <interactant intactId="EBI-357631">
        <id>Q13114</id>
    </interactant>
    <interactant intactId="EBI-372312">
        <id>P28062-2</id>
        <label>PSMB8</label>
    </interactant>
    <organismsDiffer>false</organismsDiffer>
    <experiments>3</experiments>
</comment>
<comment type="interaction">
    <interactant intactId="EBI-357631">
        <id>Q13114</id>
    </interactant>
    <interactant intactId="EBI-1211241">
        <id>Q9Y2R2</id>
        <label>PTPN22</label>
    </interactant>
    <organismsDiffer>false</organismsDiffer>
    <experiments>2</experiments>
</comment>
<comment type="interaction">
    <interactant intactId="EBI-357631">
        <id>Q13114</id>
    </interactant>
    <interactant intactId="EBI-746453">
        <id>P54725</id>
        <label>RAD23A</label>
    </interactant>
    <organismsDiffer>false</organismsDiffer>
    <experiments>3</experiments>
</comment>
<comment type="interaction">
    <interactant intactId="EBI-357631">
        <id>Q13114</id>
    </interactant>
    <interactant intactId="EBI-358507">
        <id>Q13546</id>
        <label>RIPK1</label>
    </interactant>
    <organismsDiffer>false</organismsDiffer>
    <experiments>3</experiments>
</comment>
<comment type="interaction">
    <interactant intactId="EBI-357631">
        <id>Q13114</id>
    </interactant>
    <interactant intactId="EBI-358522">
        <id>O43353</id>
        <label>RIPK2</label>
    </interactant>
    <organismsDiffer>false</organismsDiffer>
    <experiments>6</experiments>
</comment>
<comment type="interaction">
    <interactant intactId="EBI-357631">
        <id>Q13114</id>
    </interactant>
    <interactant intactId="EBI-10226430">
        <id>Q0D2K3</id>
        <label>RIPPLY1</label>
    </interactant>
    <organismsDiffer>false</organismsDiffer>
    <experiments>3</experiments>
</comment>
<comment type="interaction">
    <interactant intactId="EBI-357631">
        <id>Q13114</id>
    </interactant>
    <interactant intactId="EBI-2340927">
        <id>P78317</id>
        <label>RNF4</label>
    </interactant>
    <organismsDiffer>false</organismsDiffer>
    <experiments>3</experiments>
</comment>
<comment type="interaction">
    <interactant intactId="EBI-357631">
        <id>Q13114</id>
    </interactant>
    <interactant intactId="EBI-3938184">
        <id>Q9UHJ6</id>
        <label>SHPK</label>
    </interactant>
    <organismsDiffer>false</organismsDiffer>
    <experiments>2</experiments>
</comment>
<comment type="interaction">
    <interactant intactId="EBI-357631">
        <id>Q13114</id>
    </interactant>
    <interactant intactId="EBI-490676">
        <id>O95721</id>
        <label>SNAP29</label>
    </interactant>
    <organismsDiffer>false</organismsDiffer>
    <experiments>6</experiments>
</comment>
<comment type="interaction">
    <interactant intactId="EBI-357631">
        <id>Q13114</id>
    </interactant>
    <interactant intactId="EBI-356349">
        <id>Q92844</id>
        <label>TANK</label>
    </interactant>
    <organismsDiffer>false</organismsDiffer>
    <experiments>8</experiments>
</comment>
<comment type="interaction">
    <interactant intactId="EBI-357631">
        <id>Q13114</id>
    </interactant>
    <interactant intactId="EBI-356402">
        <id>Q9UHD2</id>
        <label>TBK1</label>
    </interactant>
    <organismsDiffer>false</organismsDiffer>
    <experiments>4</experiments>
</comment>
<comment type="interaction">
    <interactant intactId="EBI-357631">
        <id>Q13114</id>
    </interactant>
    <interactant intactId="EBI-357631">
        <id>Q13114</id>
        <label>TRAF3</label>
    </interactant>
    <organismsDiffer>false</organismsDiffer>
    <experiments>5</experiments>
</comment>
<comment type="interaction">
    <interactant intactId="EBI-357631">
        <id>Q13114</id>
    </interactant>
    <interactant intactId="EBI-928811">
        <id>Q8TDR0</id>
        <label>TRAF3IP1</label>
    </interactant>
    <organismsDiffer>false</organismsDiffer>
    <experiments>8</experiments>
</comment>
<comment type="interaction">
    <interactant intactId="EBI-357631">
        <id>Q13114</id>
    </interactant>
    <interactant intactId="EBI-523498">
        <id>O00463</id>
        <label>TRAF5</label>
    </interactant>
    <organismsDiffer>false</organismsDiffer>
    <experiments>4</experiments>
</comment>
<comment type="interaction">
    <interactant intactId="EBI-357631">
        <id>Q13114</id>
    </interactant>
    <interactant intactId="EBI-10180829">
        <id>Q7KZS0</id>
        <label>UBE2I</label>
    </interactant>
    <organismsDiffer>false</organismsDiffer>
    <experiments>3</experiments>
</comment>
<comment type="interaction">
    <interactant intactId="EBI-357631">
        <id>Q13114</id>
    </interactant>
    <interactant intactId="EBI-540834">
        <id>P61964</id>
        <label>WDR5</label>
    </interactant>
    <organismsDiffer>false</organismsDiffer>
    <experiments>2</experiments>
</comment>
<comment type="interaction">
    <interactant intactId="EBI-357631">
        <id>Q13114</id>
    </interactant>
    <interactant intactId="EBI-2859943">
        <id>Q6ZSB9</id>
        <label>ZBTB49</label>
    </interactant>
    <organismsDiffer>false</organismsDiffer>
    <experiments>3</experiments>
</comment>
<comment type="interaction">
    <interactant intactId="EBI-357631">
        <id>Q13114</id>
    </interactant>
    <interactant intactId="EBI-2623509">
        <id>Q15326</id>
        <label>ZMYND11</label>
    </interactant>
    <organismsDiffer>false</organismsDiffer>
    <experiments>2</experiments>
</comment>
<comment type="interaction">
    <interactant intactId="EBI-357631">
        <id>Q13114</id>
    </interactant>
    <interactant intactId="EBI-7252920">
        <id>Q8NAM6</id>
        <label>ZSCAN4</label>
    </interactant>
    <organismsDiffer>false</organismsDiffer>
    <experiments>3</experiments>
</comment>
<comment type="interaction">
    <interactant intactId="EBI-357631">
        <id>Q13114</id>
    </interactant>
    <interactant intactId="EBI-6115874">
        <id>Q9QYP6</id>
        <label>Azi2</label>
    </interactant>
    <organismsDiffer>true</organismsDiffer>
    <experiments>2</experiments>
</comment>
<comment type="interaction">
    <interactant intactId="EBI-357631">
        <id>Q13114</id>
    </interactant>
    <interactant intactId="EBI-6115486">
        <id>P15314</id>
        <label>Irf1</label>
    </interactant>
    <organismsDiffer>true</organismsDiffer>
    <experiments>2</experiments>
</comment>
<comment type="interaction">
    <interactant intactId="EBI-357631">
        <id>Q13114</id>
    </interactant>
    <interactant intactId="EBI-6115394">
        <id>A2APF7</id>
        <label>Zbp1</label>
    </interactant>
    <organismsDiffer>true</organismsDiffer>
    <experiments>2</experiments>
</comment>
<comment type="subcellular location">
    <subcellularLocation>
        <location evidence="34 41">Cytoplasm</location>
    </subcellularLocation>
    <subcellularLocation>
        <location evidence="1">Endosome</location>
    </subcellularLocation>
    <subcellularLocation>
        <location evidence="38">Mitochondrion</location>
    </subcellularLocation>
    <text evidence="1 38">Undergoes endocytosis together with TLR4 upon LPS signaling (By similarity). Co-localized to mitochondria with TRIM35 (PubMed:32562145).</text>
</comment>
<comment type="alternative products">
    <event type="alternative splicing"/>
    <isoform>
        <id>Q13114-1</id>
        <name>1</name>
        <sequence type="displayed"/>
    </isoform>
    <isoform>
        <id>Q13114-2</id>
        <name>2</name>
        <sequence type="described" ref="VSP_040040"/>
    </isoform>
</comment>
<comment type="domain">
    <text>The MATH/TRAF domain binds to receptor cytoplasmic domains.</text>
</comment>
<comment type="domain">
    <text evidence="1">The Ring-type zinc finger domain is required for its function in down-regulation of NFKB2 proteolytic processing.</text>
</comment>
<comment type="PTM">
    <text evidence="1 21 24 25 26 27 36 37 38 40 41 44">Undergoes 'Lys-48'-linked polyubiquitination, leading to its proteasomal degradation in response to signaling by TNFSF13B, TLR4 or through CD40. 'Lys-48'-linked polyubiquitinated form is deubiquitinated by OTUD7B, preventing TRAF3 proteolysis and over-activation of non-canonical NF-kappa-B. Undergoes 'Lys-63'-linked ubiquitination during early stages of virus infection, and 'Lys-48'-linked ubiquitination during later stages. Undergoes both 'Lys-48'-linked and 'Lys-63'-linked ubiquitination in response to TLR3 and TLR4 signaling. 'Lys-63'-linked ubiquitination can be mediated by TRIM35. Deubiquitinated by OTUB1, OTUB2 and OTUD5. Undergoes 'Lys-63'-linked deubiquitination by MYSM1 to terminate the pattern-recognition receptors/PRRs pathways (By similarity). Also undergoes 'Lys-29'-linked ubiquitination on Cys-56 and Cys-124 by NEDD4L; leading to increased 'Lys-48'- and 'Lys-63'-linked ubiquitination as well as increased binding to TBK1 (PubMed:33608556). TLR4 signals emanating from bacteria containing vesicles trigger 'Lys-33'-linked polyubiquitination that promotes the assembly of the exocyst complex thereby connecting innate immune signaling to the cellular trafficking apparatus (PubMed:27438768). Deubiquitinated by USP25 during viral infection, leading to TRAF3 stabilization and type I interferon production (By similarity). Ubiquitinated at Lys-329 by the SCF(FBXL2) complex, leading to its degradation by the proteasome (By similarity). 'Lys-63'-linked ubiquitination by FBXO11 in a NEDD8-dependent manner promotes the amplification of IFN-I signaling (PubMed:36897010).</text>
</comment>
<comment type="PTM">
    <text evidence="39">(Microbial infection) Cleaved by enterovirus D68 protease 2A; leading to inhibition of NF-kappa-B or IFN-beta triggered by TRAF3.</text>
</comment>
<comment type="disease" evidence="30 43">
    <disease id="DI-03543">
        <name>Immunodeficiency 132A</name>
        <acronym>IMD132A</acronym>
        <description>An autosomal dominant immunologic disorder characterized by increased susceptibility to infection with certain pathogens, including Herpes simplex virus and Mycobacterium abscessus. Immunologic work-up shows impaired production of cytokines, including INFB and IL6.</description>
        <dbReference type="MIM" id="614849"/>
    </disease>
    <text>The disease is caused by variants affecting the gene represented in this entry.</text>
</comment>
<comment type="disease" evidence="42 45">
    <disease id="DI-07000">
        <name>Immunodeficiency 132B</name>
        <acronym>IMD132B</acronym>
        <description>An autosomal dominant immune disorder characterized by childhood onset of recurrent upper and lower respiratory infections, B-cell lymphoid hyperplasia, and dysregulation of T-cell subsets and function. Additional variable features include autoimmunity, autoinflammation, and hyper- or hypogammaglobulinemia.</description>
        <dbReference type="MIM" id="621096"/>
    </disease>
    <text>The disease is caused by variants affecting the gene represented in this entry.</text>
</comment>
<comment type="similarity">
    <text evidence="64">Belongs to the TNF receptor-associated factor family. A subfamily.</text>
</comment>
<comment type="online information" name="Atlas of Genetics and Cytogenetics in Oncology and Haematology">
    <link uri="https://atlasgeneticsoncology.org/gene/271/TRAF3"/>
</comment>
<proteinExistence type="evidence at protein level"/>
<feature type="chain" id="PRO_0000056401" description="TNF receptor-associated factor 3">
    <location>
        <begin position="1"/>
        <end position="568"/>
    </location>
</feature>
<feature type="domain" description="MATH" evidence="3">
    <location>
        <begin position="415"/>
        <end position="560"/>
    </location>
</feature>
<feature type="zinc finger region" description="RING-type" evidence="4">
    <location>
        <begin position="68"/>
        <end position="77"/>
    </location>
</feature>
<feature type="zinc finger region" description="TRAF-type 1" evidence="5">
    <location>
        <begin position="135"/>
        <end position="190"/>
    </location>
</feature>
<feature type="zinc finger region" description="TRAF-type 2" evidence="5">
    <location>
        <begin position="191"/>
        <end position="249"/>
    </location>
</feature>
<feature type="region of interest" description="Disordered" evidence="6">
    <location>
        <begin position="1"/>
        <end position="28"/>
    </location>
</feature>
<feature type="region of interest" description="(Microbial infection) Interaction with glycoprotein N of Andes and New York hantaviruses" evidence="33">
    <location>
        <begin position="392"/>
        <end position="415"/>
    </location>
</feature>
<feature type="coiled-coil region" evidence="2">
    <location>
        <begin position="267"/>
        <end position="338"/>
    </location>
</feature>
<feature type="modified residue" description="Phosphoserine" evidence="66">
    <location>
        <position position="9"/>
    </location>
</feature>
<feature type="cross-link" description="Glycyl cysteine thioester (Cys-Gly) (interchain with G-Cter in ubiquitin)" evidence="40">
    <location>
        <position position="56"/>
    </location>
</feature>
<feature type="cross-link" description="Glycyl cysteine thioester (Cys-Gly) (interchain with G-Cter in ubiquitin)" evidence="40">
    <location>
        <position position="124"/>
    </location>
</feature>
<feature type="cross-link" description="Glycyl lysine isopeptide (Lys-Gly) (interchain with G-Cter in ubiquitin)" evidence="36">
    <location>
        <position position="168"/>
    </location>
</feature>
<feature type="cross-link" description="Glycyl lysine isopeptide (Lys-Gly) (interchain with G-Cter in ubiquitin)" evidence="1">
    <location>
        <position position="329"/>
    </location>
</feature>
<feature type="splice variant" id="VSP_040040" description="In isoform 2." evidence="60">
    <location>
        <begin position="191"/>
        <end position="273"/>
    </location>
</feature>
<feature type="sequence variant" id="VAR_069081" description="In IMD132A; uncertain significance; dbSNP:rs143813189." evidence="30">
    <original>R</original>
    <variation>W</variation>
    <location>
        <position position="118"/>
    </location>
</feature>
<feature type="sequence variant" id="VAR_052149" description="In dbSNP:rs1131877." evidence="47 48">
    <original>M</original>
    <variation>T</variation>
    <location>
        <position position="129"/>
    </location>
</feature>
<feature type="sequence variant" id="VAR_090398" description="In IMD132B; likely pathogenic; decreased TRAF3 mRNA and protein levels and absence of a truncated TRAF3 protein in patient cells." evidence="42 45">
    <location>
        <begin position="163"/>
        <end position="568"/>
    </location>
</feature>
<feature type="sequence variant" id="VAR_090399" description="In IMD132A; likely pathogenic; decreased TRAF3 expression in response to stimulation with lipopolysaccharide in patient cells; decreased expression and attenuated TNFA production in response to lipopolysaccharide and M. abscessus in transfected cells." evidence="43">
    <original>R</original>
    <variation>W</variation>
    <location>
        <position position="338"/>
    </location>
</feature>
<feature type="sequence variant" id="VAR_090400" description="In IMD132B; likely pathogenic." evidence="45">
    <location>
        <begin position="407"/>
        <end position="568"/>
    </location>
</feature>
<feature type="sequence variant" id="VAR_090401" description="In IMD132B; likely pathogenic; decreased TRAF3 mRNA and protein levels and absence of a truncated TRAF3 protein in patient cells." evidence="42">
    <location>
        <begin position="425"/>
        <end position="568"/>
    </location>
</feature>
<feature type="mutagenesis site" description="Strong increase in both 'Lys-48' and 'Lys-63'-linked ubiquitination." evidence="40">
    <original>C</original>
    <variation>A</variation>
    <location>
        <position position="56"/>
    </location>
</feature>
<feature type="mutagenesis site" description="Loss of ubiquitination activity, impaired interaction with MAVS and IRF3. No effect on interaction with IKBKE, nor with DDX3X." evidence="37">
    <original>CGH</original>
    <variation>AGA</variation>
    <location>
        <begin position="68"/>
        <end position="70"/>
    </location>
</feature>
<feature type="mutagenesis site" description="Loss of ubiquitination activity on ASC; when associated with A-70." evidence="34">
    <original>C</original>
    <variation>A</variation>
    <location>
        <position position="68"/>
    </location>
</feature>
<feature type="mutagenesis site" description="Loss of ubiquitination activity on ASC; when associated with A-68." evidence="34">
    <original>H</original>
    <variation>A</variation>
    <location>
        <position position="70"/>
    </location>
</feature>
<feature type="mutagenesis site" description="Strong increase in both 'Lys-48' and 'Lys-63'-linked ubiquitination." evidence="40">
    <original>C</original>
    <variation>A</variation>
    <location>
        <position position="124"/>
    </location>
</feature>
<feature type="mutagenesis site" description="Abolishes interaction with RALGDS." evidence="36">
    <original>K</original>
    <variation>R</variation>
    <location>
        <position position="168"/>
    </location>
</feature>
<feature type="mutagenesis site" description="Abolishes interaction with RNF216; when associated with A-443." evidence="24">
    <original>Y</original>
    <variation>A</variation>
    <location>
        <position position="441"/>
    </location>
</feature>
<feature type="mutagenesis site" description="Abolishes interaction with RNF216; when associated with A-441." evidence="24">
    <original>Q</original>
    <variation>A</variation>
    <location>
        <position position="443"/>
    </location>
</feature>
<feature type="mutagenesis site" description="Abolishes interaction with LTBR, CD40 and TANK." evidence="16">
    <original>Y</original>
    <variation>A</variation>
    <location>
        <position position="459"/>
    </location>
</feature>
<feature type="mutagenesis site" description="Confers resistance to cleavage by enterovirus D68 protease 2A." evidence="39">
    <original>G</original>
    <variation>A</variation>
    <location>
        <position position="462"/>
    </location>
</feature>
<feature type="mutagenesis site" description="Abolishes interaction with LTBR, CD40 and TANK." evidence="16">
    <original>F</original>
    <variation>E</variation>
    <location>
        <position position="512"/>
    </location>
</feature>
<feature type="mutagenesis site" description="Abolishes interaction with LTBR, CD40 and TANK." evidence="16">
    <original>F</original>
    <variation>A</variation>
    <location>
        <position position="521"/>
    </location>
</feature>
<feature type="sequence conflict" description="In Ref. 4; AAA56753." evidence="64" ref="4">
    <location>
        <position position="134"/>
    </location>
</feature>
<feature type="sequence conflict" description="In Ref. 6; BAH13910." evidence="64" ref="6">
    <original>L</original>
    <variation>F</variation>
    <location>
        <position position="158"/>
    </location>
</feature>
<feature type="sequence conflict" description="In Ref. 3; AAA68195." evidence="64" ref="3">
    <location>
        <begin position="218"/>
        <end position="242"/>
    </location>
</feature>
<feature type="sequence conflict" description="In Ref. 3; AAA68195." evidence="64" ref="3">
    <original>P</original>
    <variation>S</variation>
    <location>
        <position position="339"/>
    </location>
</feature>
<feature type="sequence conflict" description="In Ref. 4; AAA56753." evidence="64" ref="4">
    <original>R</original>
    <variation>G</variation>
    <location>
        <position position="405"/>
    </location>
</feature>
<feature type="turn" evidence="71">
    <location>
        <begin position="54"/>
        <end position="56"/>
    </location>
</feature>
<feature type="strand" evidence="71">
    <location>
        <begin position="59"/>
        <end position="62"/>
    </location>
</feature>
<feature type="strand" evidence="71">
    <location>
        <begin position="67"/>
        <end position="69"/>
    </location>
</feature>
<feature type="helix" evidence="71">
    <location>
        <begin position="74"/>
        <end position="81"/>
    </location>
</feature>
<feature type="turn" evidence="71">
    <location>
        <begin position="89"/>
        <end position="91"/>
    </location>
</feature>
<feature type="turn" evidence="71">
    <location>
        <begin position="97"/>
        <end position="99"/>
    </location>
</feature>
<feature type="turn" evidence="67">
    <location>
        <begin position="365"/>
        <end position="373"/>
    </location>
</feature>
<feature type="turn" evidence="68">
    <location>
        <begin position="375"/>
        <end position="377"/>
    </location>
</feature>
<feature type="helix" evidence="72">
    <location>
        <begin position="379"/>
        <end position="410"/>
    </location>
</feature>
<feature type="strand" evidence="72">
    <location>
        <begin position="415"/>
        <end position="423"/>
    </location>
</feature>
<feature type="helix" evidence="72">
    <location>
        <begin position="425"/>
        <end position="433"/>
    </location>
</feature>
<feature type="strand" evidence="69">
    <location>
        <begin position="438"/>
        <end position="441"/>
    </location>
</feature>
<feature type="strand" evidence="72">
    <location>
        <begin position="445"/>
        <end position="448"/>
    </location>
</feature>
<feature type="strand" evidence="72">
    <location>
        <begin position="453"/>
        <end position="459"/>
    </location>
</feature>
<feature type="helix" evidence="72">
    <location>
        <begin position="464"/>
        <end position="466"/>
    </location>
</feature>
<feature type="turn" evidence="72">
    <location>
        <begin position="467"/>
        <end position="469"/>
    </location>
</feature>
<feature type="strand" evidence="72">
    <location>
        <begin position="470"/>
        <end position="478"/>
    </location>
</feature>
<feature type="helix" evidence="72">
    <location>
        <begin position="483"/>
        <end position="485"/>
    </location>
</feature>
<feature type="strand" evidence="72">
    <location>
        <begin position="494"/>
        <end position="498"/>
    </location>
</feature>
<feature type="strand" evidence="67">
    <location>
        <begin position="502"/>
        <end position="504"/>
    </location>
</feature>
<feature type="strand" evidence="72">
    <location>
        <begin position="508"/>
        <end position="512"/>
    </location>
</feature>
<feature type="helix" evidence="72">
    <location>
        <begin position="519"/>
        <end position="521"/>
    </location>
</feature>
<feature type="strand" evidence="72">
    <location>
        <begin position="525"/>
        <end position="528"/>
    </location>
</feature>
<feature type="strand" evidence="72">
    <location>
        <begin position="532"/>
        <end position="539"/>
    </location>
</feature>
<feature type="helix" evidence="72">
    <location>
        <begin position="540"/>
        <end position="545"/>
    </location>
</feature>
<feature type="strand" evidence="72">
    <location>
        <begin position="553"/>
        <end position="560"/>
    </location>
</feature>
<feature type="strand" evidence="70">
    <location>
        <begin position="563"/>
        <end position="565"/>
    </location>
</feature>
<protein>
    <recommendedName>
        <fullName evidence="65">TNF receptor-associated factor 3</fullName>
        <ecNumber evidence="34">2.3.2.27</ecNumber>
    </recommendedName>
    <alternativeName>
        <fullName evidence="62">CD40 receptor-associated factor 1</fullName>
        <shortName evidence="62">CRAF1</shortName>
    </alternativeName>
    <alternativeName>
        <fullName evidence="61">CD40-binding protein</fullName>
        <shortName evidence="61">CD40BP</shortName>
    </alternativeName>
    <alternativeName>
        <fullName evidence="63">LMP1-associated protein 1</fullName>
        <shortName evidence="63">LAP1</shortName>
    </alternativeName>
    <alternativeName>
        <fullName evidence="64">RING-type E3 ubiquitin transferase TRAF3</fullName>
    </alternativeName>
</protein>
<dbReference type="EC" id="2.3.2.27" evidence="34"/>
<dbReference type="EMBL" id="U15637">
    <property type="protein sequence ID" value="AAA56753.1"/>
    <property type="molecule type" value="mRNA"/>
</dbReference>
<dbReference type="EMBL" id="U19260">
    <property type="protein sequence ID" value="AAA65732.1"/>
    <property type="molecule type" value="mRNA"/>
</dbReference>
<dbReference type="EMBL" id="L38509">
    <property type="protein sequence ID" value="AAA68195.1"/>
    <property type="molecule type" value="mRNA"/>
</dbReference>
<dbReference type="EMBL" id="U21092">
    <property type="protein sequence ID" value="AAC50112.1"/>
    <property type="molecule type" value="mRNA"/>
</dbReference>
<dbReference type="EMBL" id="BX247977">
    <property type="protein sequence ID" value="CAD62311.1"/>
    <property type="molecule type" value="mRNA"/>
</dbReference>
<dbReference type="EMBL" id="AK303172">
    <property type="protein sequence ID" value="BAH13910.1"/>
    <property type="molecule type" value="mRNA"/>
</dbReference>
<dbReference type="EMBL" id="AL117209">
    <property type="status" value="NOT_ANNOTATED_CDS"/>
    <property type="molecule type" value="Genomic_DNA"/>
</dbReference>
<dbReference type="EMBL" id="BC075087">
    <property type="protein sequence ID" value="AAH75087.1"/>
    <property type="molecule type" value="mRNA"/>
</dbReference>
<dbReference type="EMBL" id="BC075086">
    <property type="protein sequence ID" value="AAH75086.1"/>
    <property type="molecule type" value="mRNA"/>
</dbReference>
<dbReference type="EMBL" id="AF110908">
    <property type="protein sequence ID" value="AAD29276.1"/>
    <property type="molecule type" value="mRNA"/>
</dbReference>
<dbReference type="CCDS" id="CCDS55946.1">
    <molecule id="Q13114-2"/>
</dbReference>
<dbReference type="CCDS" id="CCDS9975.1">
    <molecule id="Q13114-1"/>
</dbReference>
<dbReference type="PIR" id="A55960">
    <property type="entry name" value="A55960"/>
</dbReference>
<dbReference type="PIR" id="S68467">
    <property type="entry name" value="S68467"/>
</dbReference>
<dbReference type="RefSeq" id="NP_001186356.1">
    <molecule id="Q13114-2"/>
    <property type="nucleotide sequence ID" value="NM_001199427.2"/>
</dbReference>
<dbReference type="RefSeq" id="NP_003291.2">
    <molecule id="Q13114-1"/>
    <property type="nucleotide sequence ID" value="NM_003300.3"/>
</dbReference>
<dbReference type="RefSeq" id="NP_663777.1">
    <molecule id="Q13114-1"/>
    <property type="nucleotide sequence ID" value="NM_145725.3"/>
</dbReference>
<dbReference type="RefSeq" id="NP_663778.1">
    <property type="nucleotide sequence ID" value="NM_145726.2"/>
</dbReference>
<dbReference type="RefSeq" id="XP_011535420.1">
    <molecule id="Q13114-2"/>
    <property type="nucleotide sequence ID" value="XM_011537118.4"/>
</dbReference>
<dbReference type="RefSeq" id="XP_016877106.1">
    <molecule id="Q13114-1"/>
    <property type="nucleotide sequence ID" value="XM_017021617.2"/>
</dbReference>
<dbReference type="RefSeq" id="XP_016877107.1">
    <molecule id="Q13114-1"/>
    <property type="nucleotide sequence ID" value="XM_017021618.2"/>
</dbReference>
<dbReference type="RefSeq" id="XP_047287694.1">
    <molecule id="Q13114-1"/>
    <property type="nucleotide sequence ID" value="XM_047431738.1"/>
</dbReference>
<dbReference type="RefSeq" id="XP_054232638.1">
    <molecule id="Q13114-1"/>
    <property type="nucleotide sequence ID" value="XM_054376663.1"/>
</dbReference>
<dbReference type="RefSeq" id="XP_054232639.1">
    <molecule id="Q13114-1"/>
    <property type="nucleotide sequence ID" value="XM_054376664.1"/>
</dbReference>
<dbReference type="RefSeq" id="XP_054232640.1">
    <molecule id="Q13114-1"/>
    <property type="nucleotide sequence ID" value="XM_054376665.1"/>
</dbReference>
<dbReference type="RefSeq" id="XP_054232648.1">
    <molecule id="Q13114-2"/>
    <property type="nucleotide sequence ID" value="XM_054376673.1"/>
</dbReference>
<dbReference type="PDB" id="1FLK">
    <property type="method" value="X-ray"/>
    <property type="resolution" value="2.80 A"/>
    <property type="chains" value="A/B=341-568"/>
</dbReference>
<dbReference type="PDB" id="1FLL">
    <property type="method" value="X-ray"/>
    <property type="resolution" value="3.50 A"/>
    <property type="chains" value="A/B=341-568"/>
</dbReference>
<dbReference type="PDB" id="1KZZ">
    <property type="method" value="X-ray"/>
    <property type="resolution" value="3.50 A"/>
    <property type="chains" value="A=377-568"/>
</dbReference>
<dbReference type="PDB" id="1L0A">
    <property type="method" value="X-ray"/>
    <property type="resolution" value="2.90 A"/>
    <property type="chains" value="A=377-568"/>
</dbReference>
<dbReference type="PDB" id="1RF3">
    <property type="method" value="X-ray"/>
    <property type="resolution" value="3.50 A"/>
    <property type="chains" value="A=377-568"/>
</dbReference>
<dbReference type="PDB" id="1ZMS">
    <property type="method" value="X-ray"/>
    <property type="resolution" value="2.80 A"/>
    <property type="chains" value="A=377-568"/>
</dbReference>
<dbReference type="PDB" id="2ECY">
    <property type="method" value="NMR"/>
    <property type="chains" value="A=43-101"/>
</dbReference>
<dbReference type="PDB" id="2GKW">
    <property type="method" value="X-ray"/>
    <property type="resolution" value="2.70 A"/>
    <property type="chains" value="A=377-568"/>
</dbReference>
<dbReference type="PDB" id="8T5P">
    <property type="method" value="X-ray"/>
    <property type="resolution" value="2.50 A"/>
    <property type="chains" value="A/B/C/D/E/F=377-568"/>
</dbReference>
<dbReference type="PDBsum" id="1FLK"/>
<dbReference type="PDBsum" id="1FLL"/>
<dbReference type="PDBsum" id="1KZZ"/>
<dbReference type="PDBsum" id="1L0A"/>
<dbReference type="PDBsum" id="1RF3"/>
<dbReference type="PDBsum" id="1ZMS"/>
<dbReference type="PDBsum" id="2ECY"/>
<dbReference type="PDBsum" id="2GKW"/>
<dbReference type="PDBsum" id="8T5P"/>
<dbReference type="BMRB" id="Q13114"/>
<dbReference type="SMR" id="Q13114"/>
<dbReference type="BioGRID" id="113039">
    <property type="interactions" value="221"/>
</dbReference>
<dbReference type="ComplexPortal" id="CPX-6018">
    <property type="entry name" value="STING-TRAF3-TBK1 complex"/>
</dbReference>
<dbReference type="ComplexPortal" id="CPX-6037">
    <property type="entry name" value="MAVS-TRAF3 E3 ubiquitin ligase complex"/>
</dbReference>
<dbReference type="CORUM" id="Q13114"/>
<dbReference type="DIP" id="DIP-6222N"/>
<dbReference type="FunCoup" id="Q13114">
    <property type="interactions" value="1022"/>
</dbReference>
<dbReference type="IntAct" id="Q13114">
    <property type="interactions" value="102"/>
</dbReference>
<dbReference type="MINT" id="Q13114"/>
<dbReference type="STRING" id="9606.ENSP00000376500"/>
<dbReference type="MoonDB" id="Q13114">
    <property type="type" value="Predicted"/>
</dbReference>
<dbReference type="GlyGen" id="Q13114">
    <property type="glycosylation" value="1 site, 1 O-linked glycan (1 site)"/>
</dbReference>
<dbReference type="iPTMnet" id="Q13114"/>
<dbReference type="PhosphoSitePlus" id="Q13114"/>
<dbReference type="BioMuta" id="TRAF3"/>
<dbReference type="DMDM" id="116242824"/>
<dbReference type="jPOST" id="Q13114"/>
<dbReference type="MassIVE" id="Q13114"/>
<dbReference type="PaxDb" id="9606-ENSP00000454207"/>
<dbReference type="PeptideAtlas" id="Q13114"/>
<dbReference type="ProteomicsDB" id="59165">
    <molecule id="Q13114-1"/>
</dbReference>
<dbReference type="ProteomicsDB" id="59166">
    <molecule id="Q13114-2"/>
</dbReference>
<dbReference type="Pumba" id="Q13114"/>
<dbReference type="Antibodypedia" id="129">
    <property type="antibodies" value="532 antibodies from 44 providers"/>
</dbReference>
<dbReference type="CPTC" id="Q13114">
    <property type="antibodies" value="3 antibodies"/>
</dbReference>
<dbReference type="DNASU" id="7187"/>
<dbReference type="Ensembl" id="ENST00000392745.8">
    <molecule id="Q13114-1"/>
    <property type="protein sequence ID" value="ENSP00000376500.3"/>
    <property type="gene ID" value="ENSG00000131323.17"/>
</dbReference>
<dbReference type="Ensembl" id="ENST00000539721.5">
    <molecule id="Q13114-2"/>
    <property type="protein sequence ID" value="ENSP00000445998.1"/>
    <property type="gene ID" value="ENSG00000131323.17"/>
</dbReference>
<dbReference type="Ensembl" id="ENST00000560371.5">
    <molecule id="Q13114-1"/>
    <property type="protein sequence ID" value="ENSP00000454207.1"/>
    <property type="gene ID" value="ENSG00000131323.17"/>
</dbReference>
<dbReference type="Ensembl" id="ENST00000699894.1">
    <molecule id="Q13114-1"/>
    <property type="protein sequence ID" value="ENSP00000514678.1"/>
    <property type="gene ID" value="ENSG00000131323.17"/>
</dbReference>
<dbReference type="GeneID" id="7187"/>
<dbReference type="KEGG" id="hsa:7187"/>
<dbReference type="MANE-Select" id="ENST00000392745.8">
    <property type="protein sequence ID" value="ENSP00000376500.3"/>
    <property type="RefSeq nucleotide sequence ID" value="NM_145725.3"/>
    <property type="RefSeq protein sequence ID" value="NP_663777.1"/>
</dbReference>
<dbReference type="UCSC" id="uc001ymc.3">
    <molecule id="Q13114-1"/>
    <property type="organism name" value="human"/>
</dbReference>
<dbReference type="AGR" id="HGNC:12033"/>
<dbReference type="CTD" id="7187"/>
<dbReference type="DisGeNET" id="7187"/>
<dbReference type="GeneCards" id="TRAF3"/>
<dbReference type="HGNC" id="HGNC:12033">
    <property type="gene designation" value="TRAF3"/>
</dbReference>
<dbReference type="HPA" id="ENSG00000131323">
    <property type="expression patterns" value="Low tissue specificity"/>
</dbReference>
<dbReference type="MalaCards" id="TRAF3"/>
<dbReference type="MIM" id="601896">
    <property type="type" value="gene"/>
</dbReference>
<dbReference type="MIM" id="614849">
    <property type="type" value="phenotype"/>
</dbReference>
<dbReference type="MIM" id="621096">
    <property type="type" value="phenotype"/>
</dbReference>
<dbReference type="neXtProt" id="NX_Q13114"/>
<dbReference type="OpenTargets" id="ENSG00000131323"/>
<dbReference type="Orphanet" id="1930">
    <property type="disease" value="Herpes simplex virus encephalitis"/>
</dbReference>
<dbReference type="PharmGKB" id="PA36710"/>
<dbReference type="VEuPathDB" id="HostDB:ENSG00000131323"/>
<dbReference type="eggNOG" id="KOG0297">
    <property type="taxonomic scope" value="Eukaryota"/>
</dbReference>
<dbReference type="GeneTree" id="ENSGT00940000160538"/>
<dbReference type="HOGENOM" id="CLU_021061_4_1_1"/>
<dbReference type="InParanoid" id="Q13114"/>
<dbReference type="OMA" id="TCEFCMT"/>
<dbReference type="OrthoDB" id="1737200at2759"/>
<dbReference type="PAN-GO" id="Q13114">
    <property type="GO annotations" value="9 GO annotations based on evolutionary models"/>
</dbReference>
<dbReference type="PhylomeDB" id="Q13114"/>
<dbReference type="TreeFam" id="TF321154"/>
<dbReference type="PathwayCommons" id="Q13114"/>
<dbReference type="Reactome" id="R-HSA-5602571">
    <property type="pathway name" value="TRAF3 deficiency - HSE"/>
</dbReference>
<dbReference type="Reactome" id="R-HSA-5668541">
    <property type="pathway name" value="TNFR2 non-canonical NF-kB pathway"/>
</dbReference>
<dbReference type="Reactome" id="R-HSA-5676594">
    <property type="pathway name" value="TNF receptor superfamily (TNFSF) members mediating non-canonical NF-kB pathway"/>
</dbReference>
<dbReference type="Reactome" id="R-HSA-5689896">
    <property type="pathway name" value="Ovarian tumor domain proteases"/>
</dbReference>
<dbReference type="Reactome" id="R-HSA-9013973">
    <property type="pathway name" value="TICAM1-dependent activation of IRF3/IRF7"/>
</dbReference>
<dbReference type="Reactome" id="R-HSA-918233">
    <property type="pathway name" value="TRAF3-dependent IRF activation pathway"/>
</dbReference>
<dbReference type="Reactome" id="R-HSA-936440">
    <property type="pathway name" value="Negative regulators of DDX58/IFIH1 signaling"/>
</dbReference>
<dbReference type="Reactome" id="R-HSA-936964">
    <property type="pathway name" value="Activation of IRF3, IRF7 mediated by TBK1, IKKEpsilon (IKBKE)"/>
</dbReference>
<dbReference type="Reactome" id="R-HSA-9692916">
    <property type="pathway name" value="SARS-CoV-1 activates/modulates innate immune responses"/>
</dbReference>
<dbReference type="Reactome" id="R-HSA-9705671">
    <property type="pathway name" value="SARS-CoV-2 activates/modulates innate and adaptive immune responses"/>
</dbReference>
<dbReference type="Reactome" id="R-HSA-9824878">
    <property type="pathway name" value="Regulation of TBK1, IKKEpsilon (IKBKE)-mediated activation of IRF3, IRF7"/>
</dbReference>
<dbReference type="Reactome" id="R-HSA-9828211">
    <property type="pathway name" value="Regulation of TBK1, IKKEpsilon-mediated activation of IRF3, IRF7 upon TLR3 ligation"/>
</dbReference>
<dbReference type="SignaLink" id="Q13114"/>
<dbReference type="SIGNOR" id="Q13114"/>
<dbReference type="BioGRID-ORCS" id="7187">
    <property type="hits" value="37 hits in 1216 CRISPR screens"/>
</dbReference>
<dbReference type="ChiTaRS" id="TRAF3">
    <property type="organism name" value="human"/>
</dbReference>
<dbReference type="EvolutionaryTrace" id="Q13114"/>
<dbReference type="GeneWiki" id="TRAF3"/>
<dbReference type="GenomeRNAi" id="7187"/>
<dbReference type="Pharos" id="Q13114">
    <property type="development level" value="Tbio"/>
</dbReference>
<dbReference type="PRO" id="PR:Q13114"/>
<dbReference type="Proteomes" id="UP000005640">
    <property type="component" value="Chromosome 14"/>
</dbReference>
<dbReference type="RNAct" id="Q13114">
    <property type="molecule type" value="protein"/>
</dbReference>
<dbReference type="Bgee" id="ENSG00000131323">
    <property type="expression patterns" value="Expressed in cartilage tissue and 176 other cell types or tissues"/>
</dbReference>
<dbReference type="ExpressionAtlas" id="Q13114">
    <property type="expression patterns" value="baseline and differential"/>
</dbReference>
<dbReference type="GO" id="GO:0035631">
    <property type="term" value="C:CD40 receptor complex"/>
    <property type="evidence" value="ECO:0000250"/>
    <property type="project" value="BHF-UCL"/>
</dbReference>
<dbReference type="GO" id="GO:0005737">
    <property type="term" value="C:cytoplasm"/>
    <property type="evidence" value="ECO:0000318"/>
    <property type="project" value="GO_Central"/>
</dbReference>
<dbReference type="GO" id="GO:0009898">
    <property type="term" value="C:cytoplasmic side of plasma membrane"/>
    <property type="evidence" value="ECO:0000250"/>
    <property type="project" value="BHF-UCL"/>
</dbReference>
<dbReference type="GO" id="GO:0005829">
    <property type="term" value="C:cytosol"/>
    <property type="evidence" value="ECO:0000304"/>
    <property type="project" value="Reactome"/>
</dbReference>
<dbReference type="GO" id="GO:0005768">
    <property type="term" value="C:endosome"/>
    <property type="evidence" value="ECO:0000314"/>
    <property type="project" value="UniProt"/>
</dbReference>
<dbReference type="GO" id="GO:0010008">
    <property type="term" value="C:endosome membrane"/>
    <property type="evidence" value="ECO:0000314"/>
    <property type="project" value="UniProt"/>
</dbReference>
<dbReference type="GO" id="GO:0005739">
    <property type="term" value="C:mitochondrion"/>
    <property type="evidence" value="ECO:0000314"/>
    <property type="project" value="UniProt"/>
</dbReference>
<dbReference type="GO" id="GO:1902554">
    <property type="term" value="C:serine/threonine protein kinase complex"/>
    <property type="evidence" value="ECO:0000303"/>
    <property type="project" value="ComplexPortal"/>
</dbReference>
<dbReference type="GO" id="GO:0000151">
    <property type="term" value="C:ubiquitin ligase complex"/>
    <property type="evidence" value="ECO:0000303"/>
    <property type="project" value="ComplexPortal"/>
</dbReference>
<dbReference type="GO" id="GO:0042802">
    <property type="term" value="F:identical protein binding"/>
    <property type="evidence" value="ECO:0000353"/>
    <property type="project" value="IntAct"/>
</dbReference>
<dbReference type="GO" id="GO:0019901">
    <property type="term" value="F:protein kinase binding"/>
    <property type="evidence" value="ECO:0007669"/>
    <property type="project" value="Ensembl"/>
</dbReference>
<dbReference type="GO" id="GO:0019903">
    <property type="term" value="F:protein phosphatase binding"/>
    <property type="evidence" value="ECO:0000353"/>
    <property type="project" value="UniProtKB"/>
</dbReference>
<dbReference type="GO" id="GO:0035591">
    <property type="term" value="F:signaling adaptor activity"/>
    <property type="evidence" value="ECO:0000318"/>
    <property type="project" value="GO_Central"/>
</dbReference>
<dbReference type="GO" id="GO:0031996">
    <property type="term" value="F:thioesterase binding"/>
    <property type="evidence" value="ECO:0000353"/>
    <property type="project" value="UniProtKB"/>
</dbReference>
<dbReference type="GO" id="GO:0005164">
    <property type="term" value="F:tumor necrosis factor receptor binding"/>
    <property type="evidence" value="ECO:0000353"/>
    <property type="project" value="UniProtKB"/>
</dbReference>
<dbReference type="GO" id="GO:0061630">
    <property type="term" value="F:ubiquitin protein ligase activity"/>
    <property type="evidence" value="ECO:0000314"/>
    <property type="project" value="UniProt"/>
</dbReference>
<dbReference type="GO" id="GO:0031625">
    <property type="term" value="F:ubiquitin protein ligase binding"/>
    <property type="evidence" value="ECO:0000353"/>
    <property type="project" value="UniProtKB"/>
</dbReference>
<dbReference type="GO" id="GO:0004842">
    <property type="term" value="F:ubiquitin-protein transferase activity"/>
    <property type="evidence" value="ECO:0000314"/>
    <property type="project" value="UniProt"/>
</dbReference>
<dbReference type="GO" id="GO:0008270">
    <property type="term" value="F:zinc ion binding"/>
    <property type="evidence" value="ECO:0007669"/>
    <property type="project" value="UniProtKB-KW"/>
</dbReference>
<dbReference type="GO" id="GO:0006915">
    <property type="term" value="P:apoptotic process"/>
    <property type="evidence" value="ECO:0000304"/>
    <property type="project" value="ProtInc"/>
</dbReference>
<dbReference type="GO" id="GO:0007166">
    <property type="term" value="P:cell surface receptor signaling pathway"/>
    <property type="evidence" value="ECO:0000318"/>
    <property type="project" value="GO_Central"/>
</dbReference>
<dbReference type="GO" id="GO:0051607">
    <property type="term" value="P:defense response to virus"/>
    <property type="evidence" value="ECO:0000303"/>
    <property type="project" value="ComplexPortal"/>
</dbReference>
<dbReference type="GO" id="GO:0032088">
    <property type="term" value="P:negative regulation of NF-kappaB transcription factor activity"/>
    <property type="evidence" value="ECO:0000315"/>
    <property type="project" value="UniProtKB"/>
</dbReference>
<dbReference type="GO" id="GO:0032481">
    <property type="term" value="P:positive regulation of type I interferon production"/>
    <property type="evidence" value="ECO:0000314"/>
    <property type="project" value="UniProt"/>
</dbReference>
<dbReference type="GO" id="GO:0042981">
    <property type="term" value="P:regulation of apoptotic process"/>
    <property type="evidence" value="ECO:0007669"/>
    <property type="project" value="InterPro"/>
</dbReference>
<dbReference type="GO" id="GO:0043122">
    <property type="term" value="P:regulation of canonical NF-kappaB signal transduction"/>
    <property type="evidence" value="ECO:0000318"/>
    <property type="project" value="GO_Central"/>
</dbReference>
<dbReference type="GO" id="GO:0001817">
    <property type="term" value="P:regulation of cytokine production"/>
    <property type="evidence" value="ECO:0000250"/>
    <property type="project" value="UniProtKB"/>
</dbReference>
<dbReference type="GO" id="GO:0050688">
    <property type="term" value="P:regulation of defense response to virus"/>
    <property type="evidence" value="ECO:0000250"/>
    <property type="project" value="UniProtKB"/>
</dbReference>
<dbReference type="GO" id="GO:0032648">
    <property type="term" value="P:regulation of interferon-beta production"/>
    <property type="evidence" value="ECO:0000250"/>
    <property type="project" value="UniProtKB"/>
</dbReference>
<dbReference type="GO" id="GO:0030162">
    <property type="term" value="P:regulation of proteolysis"/>
    <property type="evidence" value="ECO:0000315"/>
    <property type="project" value="UniProtKB"/>
</dbReference>
<dbReference type="GO" id="GO:0007165">
    <property type="term" value="P:signal transduction"/>
    <property type="evidence" value="ECO:0000304"/>
    <property type="project" value="ProtInc"/>
</dbReference>
<dbReference type="GO" id="GO:0008063">
    <property type="term" value="P:Toll signaling pathway"/>
    <property type="evidence" value="ECO:0007669"/>
    <property type="project" value="InterPro"/>
</dbReference>
<dbReference type="GO" id="GO:0034142">
    <property type="term" value="P:toll-like receptor 4 signaling pathway"/>
    <property type="evidence" value="ECO:0000314"/>
    <property type="project" value="UniProt"/>
</dbReference>
<dbReference type="GO" id="GO:0002224">
    <property type="term" value="P:toll-like receptor signaling pathway"/>
    <property type="evidence" value="ECO:0000314"/>
    <property type="project" value="UniProt"/>
</dbReference>
<dbReference type="GO" id="GO:0035666">
    <property type="term" value="P:TRIF-dependent toll-like receptor signaling pathway"/>
    <property type="evidence" value="ECO:0000304"/>
    <property type="project" value="Reactome"/>
</dbReference>
<dbReference type="GO" id="GO:0033209">
    <property type="term" value="P:tumor necrosis factor-mediated signaling pathway"/>
    <property type="evidence" value="ECO:0000315"/>
    <property type="project" value="UniProtKB"/>
</dbReference>
<dbReference type="GO" id="GO:0060337">
    <property type="term" value="P:type I interferon-mediated signaling pathway"/>
    <property type="evidence" value="ECO:0000303"/>
    <property type="project" value="ComplexPortal"/>
</dbReference>
<dbReference type="CDD" id="cd03777">
    <property type="entry name" value="MATH_TRAF3"/>
    <property type="match status" value="1"/>
</dbReference>
<dbReference type="CDD" id="cd16640">
    <property type="entry name" value="RING-HC_TRAF3"/>
    <property type="match status" value="1"/>
</dbReference>
<dbReference type="FunFam" id="2.60.210.10:FF:000001">
    <property type="entry name" value="TNF receptor-associated factor"/>
    <property type="match status" value="1"/>
</dbReference>
<dbReference type="FunFam" id="3.30.40.10:FF:000244">
    <property type="entry name" value="TNF receptor-associated factor"/>
    <property type="match status" value="1"/>
</dbReference>
<dbReference type="FunFam" id="3.30.40.10:FF:000286">
    <property type="entry name" value="TNF receptor-associated factor"/>
    <property type="match status" value="1"/>
</dbReference>
<dbReference type="FunFam" id="3.30.40.10:FF:000346">
    <property type="entry name" value="TNF receptor-associated factor"/>
    <property type="match status" value="1"/>
</dbReference>
<dbReference type="Gene3D" id="2.60.210.10">
    <property type="entry name" value="Apoptosis, Tumor Necrosis Factor Receptor Associated Protein 2, Chain A"/>
    <property type="match status" value="1"/>
</dbReference>
<dbReference type="Gene3D" id="3.30.40.10">
    <property type="entry name" value="Zinc/RING finger domain, C3HC4 (zinc finger)"/>
    <property type="match status" value="3"/>
</dbReference>
<dbReference type="InterPro" id="IPR002083">
    <property type="entry name" value="MATH/TRAF_dom"/>
</dbReference>
<dbReference type="InterPro" id="IPR012227">
    <property type="entry name" value="TNF_rcpt-assoc_TRAF_met"/>
</dbReference>
<dbReference type="InterPro" id="IPR008974">
    <property type="entry name" value="TRAF-like"/>
</dbReference>
<dbReference type="InterPro" id="IPR049342">
    <property type="entry name" value="TRAF1-6_MATH_dom"/>
</dbReference>
<dbReference type="InterPro" id="IPR049440">
    <property type="entry name" value="TRAF3/5_RING"/>
</dbReference>
<dbReference type="InterPro" id="IPR037304">
    <property type="entry name" value="TRAF3_MATH"/>
</dbReference>
<dbReference type="InterPro" id="IPR027128">
    <property type="entry name" value="TRAF3_RING-HC"/>
</dbReference>
<dbReference type="InterPro" id="IPR001841">
    <property type="entry name" value="Znf_RING"/>
</dbReference>
<dbReference type="InterPro" id="IPR013083">
    <property type="entry name" value="Znf_RING/FYVE/PHD"/>
</dbReference>
<dbReference type="InterPro" id="IPR017907">
    <property type="entry name" value="Znf_RING_CS"/>
</dbReference>
<dbReference type="InterPro" id="IPR001293">
    <property type="entry name" value="Znf_TRAF"/>
</dbReference>
<dbReference type="PANTHER" id="PTHR10131">
    <property type="entry name" value="TNF RECEPTOR ASSOCIATED FACTOR"/>
    <property type="match status" value="1"/>
</dbReference>
<dbReference type="PANTHER" id="PTHR10131:SF76">
    <property type="entry name" value="TNF RECEPTOR-ASSOCIATED FACTOR 3"/>
    <property type="match status" value="1"/>
</dbReference>
<dbReference type="Pfam" id="PF21355">
    <property type="entry name" value="TRAF-mep_MATH"/>
    <property type="match status" value="1"/>
</dbReference>
<dbReference type="Pfam" id="PF21363">
    <property type="entry name" value="TRAF3_RING"/>
    <property type="match status" value="1"/>
</dbReference>
<dbReference type="Pfam" id="PF02176">
    <property type="entry name" value="zf-TRAF"/>
    <property type="match status" value="1"/>
</dbReference>
<dbReference type="PIRSF" id="PIRSF015614">
    <property type="entry name" value="TRAF"/>
    <property type="match status" value="1"/>
</dbReference>
<dbReference type="SMART" id="SM00061">
    <property type="entry name" value="MATH"/>
    <property type="match status" value="1"/>
</dbReference>
<dbReference type="SUPFAM" id="SSF57850">
    <property type="entry name" value="RING/U-box"/>
    <property type="match status" value="1"/>
</dbReference>
<dbReference type="SUPFAM" id="SSF49599">
    <property type="entry name" value="TRAF domain-like"/>
    <property type="match status" value="3"/>
</dbReference>
<dbReference type="SUPFAM" id="SSF57953">
    <property type="entry name" value="Trimerization domain of TRAF"/>
    <property type="match status" value="1"/>
</dbReference>
<dbReference type="PROSITE" id="PS50144">
    <property type="entry name" value="MATH"/>
    <property type="match status" value="1"/>
</dbReference>
<dbReference type="PROSITE" id="PS00518">
    <property type="entry name" value="ZF_RING_1"/>
    <property type="match status" value="1"/>
</dbReference>
<dbReference type="PROSITE" id="PS50089">
    <property type="entry name" value="ZF_RING_2"/>
    <property type="match status" value="1"/>
</dbReference>
<dbReference type="PROSITE" id="PS50145">
    <property type="entry name" value="ZF_TRAF"/>
    <property type="match status" value="2"/>
</dbReference>
<name>TRAF3_HUMAN</name>
<accession>Q13114</accession>
<accession>B7Z8C4</accession>
<accession>Q12990</accession>
<accession>Q13076</accession>
<accession>Q13947</accession>
<accession>Q6AZX1</accession>
<accession>Q9UNL1</accession>
<gene>
    <name evidence="65" type="primary">TRAF3</name>
    <name evidence="65" type="synonym">CAP-1</name>
    <name evidence="62" type="synonym">CRAF1</name>
    <name evidence="1" type="synonym">TRAFAMN</name>
</gene>